<accession>Q9NQC7</accession>
<accession>O94934</accession>
<accession>Q7L3N6</accession>
<accession>Q96EH0</accession>
<accession>Q9NZX9</accession>
<name>CYLD_HUMAN</name>
<evidence type="ECO:0000250" key="1">
    <source>
        <dbReference type="UniProtKB" id="Q80TQ2"/>
    </source>
</evidence>
<evidence type="ECO:0000255" key="2">
    <source>
        <dbReference type="PROSITE-ProRule" id="PRU00045"/>
    </source>
</evidence>
<evidence type="ECO:0000255" key="3">
    <source>
        <dbReference type="PROSITE-ProRule" id="PRU10092"/>
    </source>
</evidence>
<evidence type="ECO:0000256" key="4">
    <source>
        <dbReference type="SAM" id="MobiDB-lite"/>
    </source>
</evidence>
<evidence type="ECO:0000269" key="5">
    <source>
    </source>
</evidence>
<evidence type="ECO:0000269" key="6">
    <source>
    </source>
</evidence>
<evidence type="ECO:0000269" key="7">
    <source>
    </source>
</evidence>
<evidence type="ECO:0000269" key="8">
    <source>
    </source>
</evidence>
<evidence type="ECO:0000269" key="9">
    <source>
    </source>
</evidence>
<evidence type="ECO:0000269" key="10">
    <source>
    </source>
</evidence>
<evidence type="ECO:0000269" key="11">
    <source>
    </source>
</evidence>
<evidence type="ECO:0000269" key="12">
    <source>
    </source>
</evidence>
<evidence type="ECO:0000269" key="13">
    <source>
    </source>
</evidence>
<evidence type="ECO:0000269" key="14">
    <source>
    </source>
</evidence>
<evidence type="ECO:0000269" key="15">
    <source>
    </source>
</evidence>
<evidence type="ECO:0000269" key="16">
    <source>
    </source>
</evidence>
<evidence type="ECO:0000269" key="17">
    <source>
    </source>
</evidence>
<evidence type="ECO:0000269" key="18">
    <source>
    </source>
</evidence>
<evidence type="ECO:0000269" key="19">
    <source>
    </source>
</evidence>
<evidence type="ECO:0000269" key="20">
    <source>
    </source>
</evidence>
<evidence type="ECO:0000269" key="21">
    <source>
    </source>
</evidence>
<evidence type="ECO:0000269" key="22">
    <source>
    </source>
</evidence>
<evidence type="ECO:0000269" key="23">
    <source>
    </source>
</evidence>
<evidence type="ECO:0000269" key="24">
    <source>
    </source>
</evidence>
<evidence type="ECO:0000269" key="25">
    <source>
    </source>
</evidence>
<evidence type="ECO:0000269" key="26">
    <source>
    </source>
</evidence>
<evidence type="ECO:0000269" key="27">
    <source>
    </source>
</evidence>
<evidence type="ECO:0000269" key="28">
    <source>
    </source>
</evidence>
<evidence type="ECO:0000269" key="29">
    <source>
    </source>
</evidence>
<evidence type="ECO:0000269" key="30">
    <source>
    </source>
</evidence>
<evidence type="ECO:0000269" key="31">
    <source>
    </source>
</evidence>
<evidence type="ECO:0000269" key="32">
    <source>
    </source>
</evidence>
<evidence type="ECO:0000269" key="33">
    <source>
    </source>
</evidence>
<evidence type="ECO:0000269" key="34">
    <source>
    </source>
</evidence>
<evidence type="ECO:0000269" key="35">
    <source>
    </source>
</evidence>
<evidence type="ECO:0000269" key="36">
    <source>
    </source>
</evidence>
<evidence type="ECO:0000269" key="37">
    <source>
    </source>
</evidence>
<evidence type="ECO:0000303" key="38">
    <source>
    </source>
</evidence>
<evidence type="ECO:0000303" key="39">
    <source>
    </source>
</evidence>
<evidence type="ECO:0000303" key="40">
    <source>
    </source>
</evidence>
<evidence type="ECO:0000305" key="41"/>
<evidence type="ECO:0000305" key="42">
    <source>
    </source>
</evidence>
<evidence type="ECO:0000312" key="43">
    <source>
        <dbReference type="HGNC" id="HGNC:2584"/>
    </source>
</evidence>
<evidence type="ECO:0007744" key="44">
    <source>
    </source>
</evidence>
<evidence type="ECO:0007744" key="45">
    <source>
    </source>
</evidence>
<evidence type="ECO:0007829" key="46">
    <source>
        <dbReference type="PDB" id="1IXD"/>
    </source>
</evidence>
<evidence type="ECO:0007829" key="47">
    <source>
        <dbReference type="PDB" id="1WHL"/>
    </source>
</evidence>
<evidence type="ECO:0007829" key="48">
    <source>
        <dbReference type="PDB" id="1WHM"/>
    </source>
</evidence>
<evidence type="ECO:0007829" key="49">
    <source>
        <dbReference type="PDB" id="2VHF"/>
    </source>
</evidence>
<evidence type="ECO:0007829" key="50">
    <source>
        <dbReference type="PDB" id="7OWC"/>
    </source>
</evidence>
<evidence type="ECO:0007829" key="51">
    <source>
        <dbReference type="PDB" id="7OWD"/>
    </source>
</evidence>
<feature type="chain" id="PRO_0000080698" description="Ubiquitin carboxyl-terminal hydrolase CYLD">
    <location>
        <begin position="1"/>
        <end position="956"/>
    </location>
</feature>
<feature type="domain" description="CAP-Gly 1" evidence="2">
    <location>
        <begin position="153"/>
        <end position="198"/>
    </location>
</feature>
<feature type="domain" description="CAP-Gly 2" evidence="2">
    <location>
        <begin position="253"/>
        <end position="286"/>
    </location>
</feature>
<feature type="domain" description="CAP-Gly 3" evidence="2">
    <location>
        <begin position="492"/>
        <end position="535"/>
    </location>
</feature>
<feature type="domain" description="USP">
    <location>
        <begin position="592"/>
        <end position="950"/>
    </location>
</feature>
<feature type="region of interest" description="Interaction with TRIP" evidence="12">
    <location>
        <begin position="106"/>
        <end position="593"/>
    </location>
</feature>
<feature type="region of interest" description="Disordered" evidence="4">
    <location>
        <begin position="309"/>
        <end position="353"/>
    </location>
</feature>
<feature type="region of interest" description="Disordered" evidence="4">
    <location>
        <begin position="392"/>
        <end position="411"/>
    </location>
</feature>
<feature type="region of interest" description="Interaction with TRAF2">
    <location>
        <begin position="394"/>
        <end position="469"/>
    </location>
</feature>
<feature type="region of interest" description="Interaction with IKBKG/NEMO" evidence="13">
    <location>
        <begin position="470"/>
        <end position="554"/>
    </location>
</feature>
<feature type="region of interest" description="B-box" evidence="20 32">
    <location>
        <begin position="781"/>
        <end position="833"/>
    </location>
</feature>
<feature type="compositionally biased region" description="Polar residues" evidence="4">
    <location>
        <begin position="330"/>
        <end position="349"/>
    </location>
</feature>
<feature type="active site" description="Nucleophile" evidence="3 20">
    <location>
        <position position="601"/>
    </location>
</feature>
<feature type="active site" description="Proton acceptor" evidence="42">
    <location>
        <position position="871"/>
    </location>
</feature>
<feature type="binding site" evidence="20">
    <location>
        <position position="788"/>
    </location>
    <ligand>
        <name>Zn(2+)</name>
        <dbReference type="ChEBI" id="CHEBI:29105"/>
        <label>1</label>
    </ligand>
</feature>
<feature type="binding site" evidence="20">
    <location>
        <position position="791"/>
    </location>
    <ligand>
        <name>Zn(2+)</name>
        <dbReference type="ChEBI" id="CHEBI:29105"/>
        <label>1</label>
    </ligand>
</feature>
<feature type="binding site" evidence="20">
    <location>
        <position position="799"/>
    </location>
    <ligand>
        <name>Zn(2+)</name>
        <dbReference type="ChEBI" id="CHEBI:29105"/>
        <label>2</label>
    </ligand>
</feature>
<feature type="binding site" evidence="20">
    <location>
        <position position="802"/>
    </location>
    <ligand>
        <name>Zn(2+)</name>
        <dbReference type="ChEBI" id="CHEBI:29105"/>
        <label>2</label>
    </ligand>
</feature>
<feature type="binding site" evidence="20">
    <location>
        <position position="817"/>
    </location>
    <ligand>
        <name>Zn(2+)</name>
        <dbReference type="ChEBI" id="CHEBI:29105"/>
        <label>1</label>
    </ligand>
</feature>
<feature type="binding site" evidence="20">
    <location>
        <position position="820"/>
    </location>
    <ligand>
        <name>Zn(2+)</name>
        <dbReference type="ChEBI" id="CHEBI:29105"/>
        <label>1</label>
    </ligand>
</feature>
<feature type="binding site" evidence="20">
    <location>
        <position position="825"/>
    </location>
    <ligand>
        <name>Zn(2+)</name>
        <dbReference type="ChEBI" id="CHEBI:29105"/>
        <label>2</label>
    </ligand>
</feature>
<feature type="binding site" evidence="20">
    <location>
        <position position="833"/>
    </location>
    <ligand>
        <name>Zn(2+)</name>
        <dbReference type="ChEBI" id="CHEBI:29105"/>
        <label>2</label>
    </ligand>
</feature>
<feature type="modified residue" description="Phosphoserine" evidence="45">
    <location>
        <position position="387"/>
    </location>
</feature>
<feature type="modified residue" description="Phosphoserine" evidence="15 44">
    <location>
        <position position="418"/>
    </location>
</feature>
<feature type="modified residue" description="Phosphoserine" evidence="44">
    <location>
        <position position="422"/>
    </location>
</feature>
<feature type="splice variant" id="VSP_011277" description="In isoform 2." evidence="38 40">
    <location>
        <begin position="305"/>
        <end position="307"/>
    </location>
</feature>
<feature type="sequence variant" id="VAR_085113" description="In FTDALS8; uncertain significance; dbSNP:rs751380834." evidence="36">
    <original>P</original>
    <variation>S</variation>
    <location>
        <position position="229"/>
    </location>
</feature>
<feature type="sequence variant" id="VAR_085114" description="In FTDALS8; uncertain significance." evidence="36">
    <original>S</original>
    <variation>F</variation>
    <location>
        <position position="615"/>
    </location>
</feature>
<feature type="sequence variant" id="VAR_085115" description="Abolished K63-deubiquitinase activity; decreased inhibition of NF-kappa-B; no impact on interaction with TBK1, OPTN and SQSTM." evidence="35">
    <original>D</original>
    <variation>G</variation>
    <location>
        <position position="681"/>
    </location>
</feature>
<feature type="sequence variant" id="VAR_085116" description="In FTDALS8; increased K63-deubiquitinase activity; increased inhibition of NF-kappa-B; no impact on interaction with TBK1, OPTN and SQSTM." evidence="25">
    <original>M</original>
    <variation>V</variation>
    <location>
        <position position="719"/>
    </location>
</feature>
<feature type="sequence variant" id="VAR_045967" description="In MFT1 and BRSS; dbSNP:rs121908389." evidence="11">
    <original>E</original>
    <variation>G</variation>
    <location>
        <position position="747"/>
    </location>
</feature>
<feature type="mutagenesis site" description="Reduced phosphorylation; when associated with A-422; A-432 and A-436. Loss of phosphorylation; when associated with A-422; A-432; A-436; A-439; A-441 and A-444." evidence="15">
    <original>S</original>
    <variation>A</variation>
    <location>
        <position position="418"/>
    </location>
</feature>
<feature type="mutagenesis site" description="Abolishes deubiquitination of TRAF2; when associated with E-422; E-432; E-436; E-439; E-441 and E-444." evidence="15">
    <original>S</original>
    <variation>E</variation>
    <location>
        <position position="418"/>
    </location>
</feature>
<feature type="mutagenesis site" description="Reduced phosphorylation; when associated with A-418; A-432 and A-436. Loss of phosphorylation; when associated with A-418; A-432; A-436; A-439; A-441 and A-444." evidence="15">
    <original>S</original>
    <variation>A</variation>
    <location>
        <position position="422"/>
    </location>
</feature>
<feature type="mutagenesis site" description="Abolishes deubiquitination of TRAF2; when associated with E-418; E-432; E-436; E-439; E-441 and E-444." evidence="15">
    <original>S</original>
    <variation>E</variation>
    <location>
        <position position="422"/>
    </location>
</feature>
<feature type="mutagenesis site" description="Slightly reduced phosphorylation; when associated with A-436. Reduced phosphorylation; when associated with A-418; A-422 and A-436. Loss of phosphorylation; when associated with A-418; A-422; A-436; A-439; A-441 and A-444." evidence="15">
    <original>S</original>
    <variation>A</variation>
    <location>
        <position position="432"/>
    </location>
</feature>
<feature type="mutagenesis site" description="Abolishes deubiquitination of TRAF2; when associated with E-418; E-422; E-436; E-439; E-441 and E-444." evidence="15">
    <original>S</original>
    <variation>E</variation>
    <location>
        <position position="432"/>
    </location>
</feature>
<feature type="mutagenesis site" description="Slightly reduced phosphorylation; when associated with A-432. Reduced phosphorylation; when associated with A-418; A-422 and A-432. Loss of phosphorylation; when associated with A-418; A-422; A-432; A-439; A-441 and A-444." evidence="15">
    <original>S</original>
    <variation>A</variation>
    <location>
        <position position="436"/>
    </location>
</feature>
<feature type="mutagenesis site" description="Abolishes deubiquitination of TRAF2; when associated with E-418; E-422; E-432; E-439; E-441 and E-444." evidence="15">
    <original>S</original>
    <variation>E</variation>
    <location>
        <position position="436"/>
    </location>
</feature>
<feature type="mutagenesis site" description="Loss of phosphorylation; when associated with A-418; A-422; A-432; A-436; A-441 and A-444." evidence="15">
    <original>S</original>
    <variation>A</variation>
    <location>
        <position position="439"/>
    </location>
</feature>
<feature type="mutagenesis site" description="Abolishes deubiquitination of TRAF2; when associated with E-418; E-422; E-432; E-436; E-441 and E-444." evidence="15">
    <original>S</original>
    <variation>E</variation>
    <location>
        <position position="439"/>
    </location>
</feature>
<feature type="mutagenesis site" description="Loss of phosphorylation; when associated with A-418; A-422; A-432; A-436; A-439 and A-444." evidence="15">
    <original>S</original>
    <variation>A</variation>
    <location>
        <position position="441"/>
    </location>
</feature>
<feature type="mutagenesis site" description="Abolishes deubiquitination of TRAF2; when associated with E-418; E-422; E-432; E-436; E-439 and E-444." evidence="15">
    <original>S</original>
    <variation>E</variation>
    <location>
        <position position="441"/>
    </location>
</feature>
<feature type="mutagenesis site" description="Loss of phosphorylation; when associated with A-418; A-422; A-432; A-436; A-439 and A-441." evidence="15">
    <original>S</original>
    <variation>A</variation>
    <location>
        <position position="444"/>
    </location>
</feature>
<feature type="mutagenesis site" description="Abolishes deubiquitination of TRAF2; when associated with E-418; E-422; E-432; E-436; E-439 and E-441." evidence="15">
    <original>S</original>
    <variation>E</variation>
    <location>
        <position position="444"/>
    </location>
</feature>
<feature type="mutagenesis site" description="Abolishes binding to TRAF2." evidence="9">
    <original>S</original>
    <variation>A</variation>
    <location>
        <position position="457"/>
    </location>
</feature>
<feature type="mutagenesis site" description="Loss of deubiquitinating activity." evidence="7 8 18 20 30">
    <original>C</original>
    <variation>A</variation>
    <variation>S</variation>
    <location>
        <position position="601"/>
    </location>
</feature>
<feature type="mutagenesis site" description="Impaired interaction with SPATA2." evidence="32">
    <original>L</original>
    <variation>D</variation>
    <location>
        <position position="622"/>
    </location>
</feature>
<feature type="mutagenesis site" description="Loss of deubiquitinating activity." evidence="9">
    <original>H</original>
    <variation>N</variation>
    <location>
        <position position="871"/>
    </location>
</feature>
<feature type="strand" evidence="47">
    <location>
        <begin position="130"/>
        <end position="134"/>
    </location>
</feature>
<feature type="strand" evidence="47">
    <location>
        <begin position="136"/>
        <end position="139"/>
    </location>
</feature>
<feature type="strand" evidence="47">
    <location>
        <begin position="141"/>
        <end position="149"/>
    </location>
</feature>
<feature type="strand" evidence="47">
    <location>
        <begin position="154"/>
        <end position="157"/>
    </location>
</feature>
<feature type="strand" evidence="47">
    <location>
        <begin position="163"/>
        <end position="167"/>
    </location>
</feature>
<feature type="strand" evidence="47">
    <location>
        <begin position="169"/>
        <end position="171"/>
    </location>
</feature>
<feature type="turn" evidence="47">
    <location>
        <begin position="191"/>
        <end position="193"/>
    </location>
</feature>
<feature type="strand" evidence="47">
    <location>
        <begin position="194"/>
        <end position="197"/>
    </location>
</feature>
<feature type="helix" evidence="47">
    <location>
        <begin position="199"/>
        <end position="201"/>
    </location>
</feature>
<feature type="strand" evidence="47">
    <location>
        <begin position="202"/>
        <end position="204"/>
    </location>
</feature>
<feature type="strand" evidence="48">
    <location>
        <begin position="235"/>
        <end position="240"/>
    </location>
</feature>
<feature type="strand" evidence="48">
    <location>
        <begin position="243"/>
        <end position="253"/>
    </location>
</feature>
<feature type="turn" evidence="48">
    <location>
        <begin position="259"/>
        <end position="261"/>
    </location>
</feature>
<feature type="strand" evidence="48">
    <location>
        <begin position="264"/>
        <end position="272"/>
    </location>
</feature>
<feature type="strand" evidence="48">
    <location>
        <begin position="278"/>
        <end position="280"/>
    </location>
</feature>
<feature type="strand" evidence="48">
    <location>
        <begin position="283"/>
        <end position="285"/>
    </location>
</feature>
<feature type="strand" evidence="48">
    <location>
        <begin position="293"/>
        <end position="298"/>
    </location>
</feature>
<feature type="helix" evidence="48">
    <location>
        <begin position="299"/>
        <end position="301"/>
    </location>
</feature>
<feature type="strand" evidence="48">
    <location>
        <begin position="302"/>
        <end position="304"/>
    </location>
</feature>
<feature type="turn" evidence="46">
    <location>
        <begin position="463"/>
        <end position="465"/>
    </location>
</feature>
<feature type="strand" evidence="46">
    <location>
        <begin position="466"/>
        <end position="468"/>
    </location>
</feature>
<feature type="strand" evidence="51">
    <location>
        <begin position="474"/>
        <end position="478"/>
    </location>
</feature>
<feature type="strand" evidence="50">
    <location>
        <begin position="480"/>
        <end position="482"/>
    </location>
</feature>
<feature type="strand" evidence="51">
    <location>
        <begin position="484"/>
        <end position="492"/>
    </location>
</feature>
<feature type="strand" evidence="46">
    <location>
        <begin position="495"/>
        <end position="497"/>
    </location>
</feature>
<feature type="strand" evidence="51">
    <location>
        <begin position="501"/>
        <end position="508"/>
    </location>
</feature>
<feature type="strand" evidence="51">
    <location>
        <begin position="514"/>
        <end position="518"/>
    </location>
</feature>
<feature type="strand" evidence="51">
    <location>
        <begin position="521"/>
        <end position="523"/>
    </location>
</feature>
<feature type="strand" evidence="51">
    <location>
        <begin position="531"/>
        <end position="535"/>
    </location>
</feature>
<feature type="helix" evidence="51">
    <location>
        <begin position="536"/>
        <end position="538"/>
    </location>
</feature>
<feature type="strand" evidence="50">
    <location>
        <begin position="539"/>
        <end position="541"/>
    </location>
</feature>
<feature type="turn" evidence="51">
    <location>
        <begin position="543"/>
        <end position="547"/>
    </location>
</feature>
<feature type="helix" evidence="50">
    <location>
        <begin position="554"/>
        <end position="562"/>
    </location>
</feature>
<feature type="helix" evidence="49">
    <location>
        <begin position="584"/>
        <end position="586"/>
    </location>
</feature>
<feature type="strand" evidence="49">
    <location>
        <begin position="588"/>
        <end position="591"/>
    </location>
</feature>
<feature type="helix" evidence="49">
    <location>
        <begin position="601"/>
        <end position="611"/>
    </location>
</feature>
<feature type="strand" evidence="49">
    <location>
        <begin position="612"/>
        <end position="614"/>
    </location>
</feature>
<feature type="helix" evidence="49">
    <location>
        <begin position="615"/>
        <end position="617"/>
    </location>
</feature>
<feature type="helix" evidence="49">
    <location>
        <begin position="618"/>
        <end position="622"/>
    </location>
</feature>
<feature type="helix" evidence="49">
    <location>
        <begin position="633"/>
        <end position="642"/>
    </location>
</feature>
<feature type="helix" evidence="49">
    <location>
        <begin position="645"/>
        <end position="650"/>
    </location>
</feature>
<feature type="strand" evidence="49">
    <location>
        <begin position="652"/>
        <end position="654"/>
    </location>
</feature>
<feature type="helix" evidence="49">
    <location>
        <begin position="656"/>
        <end position="669"/>
    </location>
</feature>
<feature type="helix" evidence="49">
    <location>
        <begin position="682"/>
        <end position="690"/>
    </location>
</feature>
<feature type="turn" evidence="49">
    <location>
        <begin position="691"/>
        <end position="694"/>
    </location>
</feature>
<feature type="strand" evidence="49">
    <location>
        <begin position="699"/>
        <end position="704"/>
    </location>
</feature>
<feature type="strand" evidence="49">
    <location>
        <begin position="710"/>
        <end position="713"/>
    </location>
</feature>
<feature type="helix" evidence="49">
    <location>
        <begin position="730"/>
        <end position="741"/>
    </location>
</feature>
<feature type="strand" evidence="49">
    <location>
        <begin position="743"/>
        <end position="747"/>
    </location>
</feature>
<feature type="strand" evidence="49">
    <location>
        <begin position="750"/>
        <end position="755"/>
    </location>
</feature>
<feature type="strand" evidence="49">
    <location>
        <begin position="760"/>
        <end position="764"/>
    </location>
</feature>
<feature type="strand" evidence="49">
    <location>
        <begin position="773"/>
        <end position="775"/>
    </location>
</feature>
<feature type="helix" evidence="49">
    <location>
        <begin position="778"/>
        <end position="780"/>
    </location>
</feature>
<feature type="strand" evidence="49">
    <location>
        <begin position="781"/>
        <end position="784"/>
    </location>
</feature>
<feature type="turn" evidence="49">
    <location>
        <begin position="789"/>
        <end position="791"/>
    </location>
</feature>
<feature type="helix" evidence="49">
    <location>
        <begin position="800"/>
        <end position="802"/>
    </location>
</feature>
<feature type="turn" evidence="49">
    <location>
        <begin position="806"/>
        <end position="811"/>
    </location>
</feature>
<feature type="helix" evidence="49">
    <location>
        <begin position="818"/>
        <end position="824"/>
    </location>
</feature>
<feature type="helix" evidence="49">
    <location>
        <begin position="828"/>
        <end position="830"/>
    </location>
</feature>
<feature type="helix" evidence="49">
    <location>
        <begin position="844"/>
        <end position="846"/>
    </location>
</feature>
<feature type="strand" evidence="49">
    <location>
        <begin position="859"/>
        <end position="868"/>
    </location>
</feature>
<feature type="strand" evidence="49">
    <location>
        <begin position="871"/>
        <end position="877"/>
    </location>
</feature>
<feature type="strand" evidence="49">
    <location>
        <begin position="879"/>
        <end position="881"/>
    </location>
</feature>
<feature type="strand" evidence="49">
    <location>
        <begin position="885"/>
        <end position="889"/>
    </location>
</feature>
<feature type="strand" evidence="49">
    <location>
        <begin position="905"/>
        <end position="908"/>
    </location>
</feature>
<feature type="helix" evidence="49">
    <location>
        <begin position="911"/>
        <end position="914"/>
    </location>
</feature>
<feature type="helix" evidence="49">
    <location>
        <begin position="920"/>
        <end position="925"/>
    </location>
</feature>
<feature type="helix" evidence="49">
    <location>
        <begin position="928"/>
        <end position="930"/>
    </location>
</feature>
<feature type="helix" evidence="49">
    <location>
        <begin position="935"/>
        <end position="940"/>
    </location>
</feature>
<feature type="strand" evidence="49">
    <location>
        <begin position="944"/>
        <end position="948"/>
    </location>
</feature>
<feature type="helix" evidence="49">
    <location>
        <begin position="950"/>
        <end position="952"/>
    </location>
</feature>
<protein>
    <recommendedName>
        <fullName>Ubiquitin carboxyl-terminal hydrolase CYLD</fullName>
        <ecNumber evidence="20 30 32 33 35 37">3.4.19.12</ecNumber>
    </recommendedName>
    <alternativeName>
        <fullName>Deubiquitinating enzyme CYLD</fullName>
    </alternativeName>
    <alternativeName>
        <fullName>Ubiquitin thioesterase CYLD</fullName>
    </alternativeName>
    <alternativeName>
        <fullName>Ubiquitin-specific-processing protease CYLD</fullName>
    </alternativeName>
</protein>
<proteinExistence type="evidence at protein level"/>
<keyword id="KW-0002">3D-structure</keyword>
<keyword id="KW-0025">Alternative splicing</keyword>
<keyword id="KW-0036">Amyotrophic lateral sclerosis</keyword>
<keyword id="KW-0131">Cell cycle</keyword>
<keyword id="KW-1003">Cell membrane</keyword>
<keyword id="KW-0966">Cell projection</keyword>
<keyword id="KW-0963">Cytoplasm</keyword>
<keyword id="KW-0206">Cytoskeleton</keyword>
<keyword id="KW-0225">Disease variant</keyword>
<keyword id="KW-0378">Hydrolase</keyword>
<keyword id="KW-0391">Immunity</keyword>
<keyword id="KW-0399">Innate immunity</keyword>
<keyword id="KW-0472">Membrane</keyword>
<keyword id="KW-0479">Metal-binding</keyword>
<keyword id="KW-0493">Microtubule</keyword>
<keyword id="KW-0523">Neurodegeneration</keyword>
<keyword id="KW-0597">Phosphoprotein</keyword>
<keyword id="KW-0645">Protease</keyword>
<keyword id="KW-1267">Proteomics identification</keyword>
<keyword id="KW-1185">Reference proteome</keyword>
<keyword id="KW-0677">Repeat</keyword>
<keyword id="KW-0788">Thiol protease</keyword>
<keyword id="KW-0043">Tumor suppressor</keyword>
<keyword id="KW-0832">Ubl conjugation</keyword>
<keyword id="KW-0833">Ubl conjugation pathway</keyword>
<keyword id="KW-0879">Wnt signaling pathway</keyword>
<keyword id="KW-0862">Zinc</keyword>
<reference key="1">
    <citation type="journal article" date="2000" name="Nat. Genet.">
        <title>Identification of the familial cylindromatosis tumor suppressor gene.</title>
        <authorList>
            <person name="Bignell G.R."/>
            <person name="Brown C."/>
            <person name="Biggs P.J."/>
            <person name="Lakhani S.R."/>
            <person name="Jones C."/>
            <person name="Hansen J."/>
            <person name="Blair E."/>
            <person name="Hofmann B."/>
            <person name="Siebert R."/>
            <person name="Turner G."/>
            <person name="Evans D.G."/>
            <person name="Schrander-Stumpel C."/>
            <person name="Beemer F.A."/>
            <person name="Van Den Ouweland A."/>
            <person name="Halley D."/>
            <person name="Delpech B."/>
            <person name="Cleveland M.G."/>
            <person name="Leigh I."/>
            <person name="Leisti J."/>
            <person name="Rasmussen S."/>
            <person name="Wallace M.R."/>
            <person name="Fenske C."/>
            <person name="Banerjee P."/>
            <person name="Oiso N."/>
            <person name="Chaggar R."/>
            <person name="Merrett S."/>
            <person name="Leonard N."/>
            <person name="Huber M."/>
            <person name="Hohl D."/>
            <person name="Chapman P."/>
            <person name="Burn J."/>
            <person name="Swift S."/>
            <person name="Smith A."/>
            <person name="Ashworth A."/>
            <person name="Stratton M.R."/>
        </authorList>
    </citation>
    <scope>NUCLEOTIDE SEQUENCE [MRNA] (ISOFORM 1)</scope>
    <scope>TISSUE SPECIFICITY</scope>
    <scope>INVOLVEMENT IN FAMILIAL CYLINDROMATOSIS</scope>
</reference>
<reference key="2">
    <citation type="journal article" date="1998" name="DNA Res.">
        <title>Prediction of the coding sequences of unidentified human genes. XII. The complete sequences of 100 new cDNA clones from brain which code for large proteins in vitro.</title>
        <authorList>
            <person name="Nagase T."/>
            <person name="Ishikawa K."/>
            <person name="Suyama M."/>
            <person name="Kikuno R."/>
            <person name="Hirosawa M."/>
            <person name="Miyajima N."/>
            <person name="Tanaka A."/>
            <person name="Kotani H."/>
            <person name="Nomura N."/>
            <person name="Ohara O."/>
        </authorList>
    </citation>
    <scope>NUCLEOTIDE SEQUENCE [LARGE SCALE MRNA] (ISOFORM 2)</scope>
    <source>
        <tissue>Brain</tissue>
    </source>
</reference>
<reference key="3">
    <citation type="journal article" date="2002" name="DNA Res.">
        <title>Construction of expression-ready cDNA clones for KIAA genes: manual curation of 330 KIAA cDNA clones.</title>
        <authorList>
            <person name="Nakajima D."/>
            <person name="Okazaki N."/>
            <person name="Yamakawa H."/>
            <person name="Kikuno R."/>
            <person name="Ohara O."/>
            <person name="Nagase T."/>
        </authorList>
    </citation>
    <scope>SEQUENCE REVISION</scope>
</reference>
<reference key="4">
    <citation type="journal article" date="2004" name="Genome Res.">
        <title>The status, quality, and expansion of the NIH full-length cDNA project: the Mammalian Gene Collection (MGC).</title>
        <authorList>
            <consortium name="The MGC Project Team"/>
        </authorList>
    </citation>
    <scope>NUCLEOTIDE SEQUENCE [LARGE SCALE MRNA] (ISOFORM 2)</scope>
    <source>
        <tissue>Uterus</tissue>
    </source>
</reference>
<reference key="5">
    <citation type="journal article" date="2000" name="Genome Res.">
        <title>Cloning and functional analysis of cDNAs with open reading frames for 300 previously undefined genes expressed in CD34+ hematopoietic stem/progenitor cells.</title>
        <authorList>
            <person name="Zhang Q.-H."/>
            <person name="Ye M."/>
            <person name="Wu X.-Y."/>
            <person name="Ren S.-X."/>
            <person name="Zhao M."/>
            <person name="Zhao C.-J."/>
            <person name="Fu G."/>
            <person name="Shen Y."/>
            <person name="Fan H.-Y."/>
            <person name="Lu G."/>
            <person name="Zhong M."/>
            <person name="Xu X.-R."/>
            <person name="Han Z.-G."/>
            <person name="Zhang J.-W."/>
            <person name="Tao J."/>
            <person name="Huang Q.-H."/>
            <person name="Zhou J."/>
            <person name="Hu G.-X."/>
            <person name="Gu J."/>
            <person name="Chen S.-J."/>
            <person name="Chen Z."/>
        </authorList>
    </citation>
    <scope>NUCLEOTIDE SEQUENCE [LARGE SCALE MRNA] OF 397-956</scope>
    <source>
        <tissue>Umbilical cord blood</tissue>
    </source>
</reference>
<reference key="6">
    <citation type="journal article" date="2003" name="Nature">
        <title>CYLD is a deubiquitinating enzyme that negatively regulates NF-kappaB activation by TNFR family members.</title>
        <authorList>
            <person name="Trompouki E."/>
            <person name="Hatzivassiliou E."/>
            <person name="Tsichritzis T."/>
            <person name="Farmer H."/>
            <person name="Ashworth A."/>
            <person name="Mosialos G."/>
        </authorList>
    </citation>
    <scope>FUNCTION</scope>
    <scope>INTERACTION WITH IKBKG/NEMO</scope>
    <scope>MUTAGENESIS OF CYS-601</scope>
</reference>
<reference key="7">
    <citation type="journal article" date="2003" name="Nature">
        <title>Loss of the cylindromatosis tumour suppressor inhibits apoptosis by activating NF-kappaB.</title>
        <authorList>
            <person name="Brummelkamp T.R."/>
            <person name="Nijman S.M.B."/>
            <person name="Dirac A.M.G."/>
            <person name="Bernards R."/>
        </authorList>
    </citation>
    <scope>FUNCTION</scope>
    <scope>INTERACTION WITH IKBKG/NEMO</scope>
    <scope>MUTAGENESIS OF CYS-601</scope>
</reference>
<reference key="8">
    <citation type="journal article" date="2003" name="Nature">
        <title>The tumour suppressor CYLD negatively regulates NF-kappaB signalling by deubiquitination.</title>
        <authorList>
            <person name="Kovalenko A."/>
            <person name="Chable-Bessia C."/>
            <person name="Cantarella G."/>
            <person name="Israeel A."/>
            <person name="Wallach D."/>
            <person name="Courtois G."/>
        </authorList>
    </citation>
    <scope>FUNCTION</scope>
    <scope>INTERACTION WITH IKBKG/NEMO AND TRAF2</scope>
    <scope>MUTAGENESIS OF SER-457 AND HIS-871</scope>
</reference>
<reference key="9">
    <citation type="journal article" date="2003" name="J. Exp. Med.">
        <title>The tumor suppressor CYLD interacts with TRIP and regulates negatively nuclear factor kappaB activation by tumor necrosis factor.</title>
        <authorList>
            <person name="Regamey A."/>
            <person name="Hohl D."/>
            <person name="Liu J.W."/>
            <person name="Roger T."/>
            <person name="Kogerman P."/>
            <person name="Toftgaard R."/>
            <person name="Huber M."/>
        </authorList>
    </citation>
    <scope>FUNCTION</scope>
    <scope>SUBCELLULAR LOCATION</scope>
    <scope>INTERACTION WITH TRIP</scope>
</reference>
<reference key="10">
    <citation type="journal article" date="2005" name="Mol. Cell. Biol.">
        <title>Regulation of the deubiquitinating enzyme CYLD by IkappaB kinase gamma-dependent phosphorylation.</title>
        <authorList>
            <person name="Reiley W."/>
            <person name="Zhang M."/>
            <person name="Wu X."/>
            <person name="Granger E."/>
            <person name="Sun S.C."/>
        </authorList>
    </citation>
    <scope>FUNCTION</scope>
    <scope>INTERACTION WITH TRAF2</scope>
    <scope>ACTIVITY REGULATION</scope>
    <scope>MUTAGENESIS OF SER-418; SER-422; SER-432; SER-436; SER-439; SER-441 AND SER-444</scope>
    <scope>PHOSPHORYLATION AT SER-418</scope>
</reference>
<reference key="11">
    <citation type="journal article" date="2007" name="Proc. Natl. Acad. Sci. U.S.A.">
        <title>The tumor suppressor CYLD regulates entry into mitosis.</title>
        <authorList>
            <person name="Stegmeier F."/>
            <person name="Sowa M.E."/>
            <person name="Nalepa G."/>
            <person name="Gygi S.P."/>
            <person name="Harper J.W."/>
            <person name="Elledge S.J."/>
        </authorList>
    </citation>
    <scope>FUNCTION</scope>
    <scope>MUTAGENESIS OF CYS-601</scope>
    <scope>INTERACTION WITH PLK1</scope>
    <scope>SUBCELLULAR LOCATION</scope>
</reference>
<reference key="12">
    <citation type="journal article" date="2008" name="EMBO Rep.">
        <title>The tumour suppressor CYLD is a negative regulator of RIG-I-mediated antiviral response.</title>
        <authorList>
            <person name="Friedman C.S."/>
            <person name="O'Donnell M.A."/>
            <person name="Legarda-Addison D."/>
            <person name="Ng A."/>
            <person name="Cardenas W.B."/>
            <person name="Yount J.S."/>
            <person name="Moran T.M."/>
            <person name="Basler C.F."/>
            <person name="Komuro A."/>
            <person name="Horvath C.M."/>
            <person name="Xavier R."/>
            <person name="Ting A.T."/>
        </authorList>
    </citation>
    <scope>FUNCTION</scope>
    <scope>SUBUNIT</scope>
    <scope>INTERACTION WITH RIGI; MAVS; TBK1 AND IKKE</scope>
</reference>
<reference key="13">
    <citation type="journal article" date="2008" name="J. Biol. Chem.">
        <title>The tumor suppressor CYLD regulates microtubule dynamics and plays a role in cell migration.</title>
        <authorList>
            <person name="Gao J."/>
            <person name="Huo L."/>
            <person name="Sun X."/>
            <person name="Liu M."/>
            <person name="Li D."/>
            <person name="Dong J.T."/>
            <person name="Zhou J."/>
        </authorList>
    </citation>
    <scope>FUNCTION</scope>
    <scope>SUBCELLULAR LOCATION</scope>
</reference>
<reference key="14">
    <citation type="journal article" date="2008" name="Proc. Natl. Acad. Sci. U.S.A.">
        <title>A quantitative atlas of mitotic phosphorylation.</title>
        <authorList>
            <person name="Dephoure N."/>
            <person name="Zhou C."/>
            <person name="Villen J."/>
            <person name="Beausoleil S.A."/>
            <person name="Bakalarski C.E."/>
            <person name="Elledge S.J."/>
            <person name="Gygi S.P."/>
        </authorList>
    </citation>
    <scope>IDENTIFICATION BY MASS SPECTROMETRY [LARGE SCALE ANALYSIS]</scope>
    <source>
        <tissue>Cervix carcinoma</tissue>
    </source>
</reference>
<reference key="15">
    <citation type="journal article" date="2010" name="Blood">
        <title>CYLD regulates angiogenesis by mediating vascular endothelial cell migration.</title>
        <authorList>
            <person name="Gao J."/>
            <person name="Sun L."/>
            <person name="Huo L."/>
            <person name="Liu M."/>
            <person name="Li D."/>
            <person name="Zhou J."/>
        </authorList>
    </citation>
    <scope>FUNCTION</scope>
    <scope>SUBCELLULAR LOCATION</scope>
</reference>
<reference key="16">
    <citation type="journal article" date="2010" name="EMBO J.">
        <title>CYLD negatively regulates cell-cycle progression by inactivating HDAC6 and increasing the levels of acetylated tubulin.</title>
        <authorList>
            <person name="Wickstrom S.A."/>
            <person name="Masoumi K.C."/>
            <person name="Khochbin S."/>
            <person name="Fassler R."/>
            <person name="Massoumi R."/>
        </authorList>
    </citation>
    <scope>FUNCTION</scope>
    <scope>INTERACTION WITH HDAC6; BCL3 AND MICROTUBULES</scope>
    <scope>SUBCELLULAR LOCATION</scope>
</reference>
<reference key="17">
    <citation type="journal article" date="2010" name="Mol. Cell">
        <title>Loss of the tumor suppressor CYLD enhances Wnt/beta-catenin signaling through K63-linked ubiquitination of Dvl.</title>
        <authorList>
            <person name="Tauriello D.V."/>
            <person name="Haegebarth A."/>
            <person name="Kuper I."/>
            <person name="Edelmann M.J."/>
            <person name="Henraat M."/>
            <person name="Canninga-van Dijk M.R."/>
            <person name="Kessler B.M."/>
            <person name="Clevers H."/>
            <person name="Maurice M.M."/>
        </authorList>
    </citation>
    <scope>FUNCTION</scope>
    <scope>INTERACTION WITH DVL1 AND DVL3</scope>
</reference>
<reference key="18">
    <citation type="journal article" date="2013" name="J. Proteome Res.">
        <title>Toward a comprehensive characterization of a human cancer cell phosphoproteome.</title>
        <authorList>
            <person name="Zhou H."/>
            <person name="Di Palma S."/>
            <person name="Preisinger C."/>
            <person name="Peng M."/>
            <person name="Polat A.N."/>
            <person name="Heck A.J."/>
            <person name="Mohammed S."/>
        </authorList>
    </citation>
    <scope>PHOSPHORYLATION [LARGE SCALE ANALYSIS] AT SER-418 AND SER-422</scope>
    <scope>IDENTIFICATION BY MASS SPECTROMETRY [LARGE SCALE ANALYSIS]</scope>
    <source>
        <tissue>Erythroleukemia</tissue>
    </source>
</reference>
<reference key="19">
    <citation type="journal article" date="2014" name="J. Proteomics">
        <title>An enzyme assisted RP-RPLC approach for in-depth analysis of human liver phosphoproteome.</title>
        <authorList>
            <person name="Bian Y."/>
            <person name="Song C."/>
            <person name="Cheng K."/>
            <person name="Dong M."/>
            <person name="Wang F."/>
            <person name="Huang J."/>
            <person name="Sun D."/>
            <person name="Wang L."/>
            <person name="Ye M."/>
            <person name="Zou H."/>
        </authorList>
    </citation>
    <scope>PHOSPHORYLATION [LARGE SCALE ANALYSIS] AT SER-387</scope>
    <scope>IDENTIFICATION BY MASS SPECTROMETRY [LARGE SCALE ANALYSIS]</scope>
    <source>
        <tissue>Liver</tissue>
    </source>
</reference>
<reference key="20">
    <citation type="journal article" date="2014" name="Nat. Commun.">
        <title>The deubiquitinating enzyme CYLD controls apical docking of basal bodies in ciliated epithelial cells.</title>
        <authorList>
            <person name="Eguether T."/>
            <person name="Ermolaeva M.A."/>
            <person name="Zhao Y."/>
            <person name="Bonnet M.C."/>
            <person name="Jain A."/>
            <person name="Pasparakis M."/>
            <person name="Courtois G."/>
            <person name="Tassin A.M."/>
        </authorList>
    </citation>
    <scope>SUBCELLULAR LOCATION</scope>
    <scope>INTERACTION WITH CEP350</scope>
</reference>
<reference key="21">
    <citation type="journal article" date="2002" name="J. Invest. Dermatol.">
        <title>Phenotype diversity in familial cylindromatosis: a frameshift mutation in the tumor suppressor gene CYLD underlies different tumors of skin appendages.</title>
        <authorList>
            <person name="Poblete Gutierrez P."/>
            <person name="Eggermann T."/>
            <person name="Hoeller D."/>
            <person name="Jugert F.K."/>
            <person name="Beermann T."/>
            <person name="Grussendorf-Conen E.-I."/>
            <person name="Zerres K."/>
            <person name="Merk H.F."/>
            <person name="Frank J."/>
        </authorList>
    </citation>
    <scope>INVOLVEMENT IN FCYL</scope>
    <scope>INVOLVEMENT IN BRSS</scope>
</reference>
<reference key="22">
    <citation type="journal article" date="2003" name="Clin. Exp. Dermatol.">
        <title>Identification of a recurrent mutation in the CYLD gene in Brooke-Spiegler syndrome.</title>
        <authorList>
            <person name="Scheinfeld N."/>
            <person name="Hu G."/>
            <person name="Gill M."/>
            <person name="Austin C."/>
            <person name="Celebi J.T."/>
        </authorList>
    </citation>
    <scope>INVOLVEMENT IN BRSS</scope>
</reference>
<reference key="23">
    <citation type="journal article" date="2005" name="Br. J. Dermatol.">
        <title>Two novel CYLD gene mutations in Chinese families with trichoepithelioma and a literature review of 16 families with trichoepithelioma reported in China.</title>
        <authorList>
            <person name="Liang Y.H."/>
            <person name="Gao M."/>
            <person name="Sun L.D."/>
            <person name="Liu L.J."/>
            <person name="Cui Y."/>
            <person name="Yang S."/>
            <person name="Fan X."/>
            <person name="Wang J."/>
            <person name="Xiao F.L."/>
            <person name="Zhang X.J."/>
        </authorList>
    </citation>
    <scope>INVOLVEMENT IN MFT1</scope>
</reference>
<reference key="24">
    <citation type="journal article" date="2005" name="J. Invest. Dermatol.">
        <title>Mutations in the CYLD gene in Brooke-Spiegler syndrome, familial cylindromatosis, and multiple familial trichoepithelioma: lack of genotype-phenotype correlation.</title>
        <authorList>
            <person name="Bowen S."/>
            <person name="Gill M."/>
            <person name="Lee D.A."/>
            <person name="Fisher G."/>
            <person name="Geronemus R.G."/>
            <person name="Vazquez M.E."/>
            <person name="Celebi J.T."/>
        </authorList>
    </citation>
    <scope>INVOLVEMENT IN BRSS</scope>
</reference>
<reference key="25">
    <citation type="journal article" date="2006" name="Clin. Genet.">
        <title>CYLD mutations underlie Brooke-Spiegler, familial cylindromatosis, and multiple familial trichoepithelioma syndromes.</title>
        <authorList>
            <person name="Young A.L."/>
            <person name="Kellermayer R."/>
            <person name="Szigeti R."/>
            <person name="Teszas A."/>
            <person name="Azmi S."/>
            <person name="Celebi J.T."/>
        </authorList>
    </citation>
    <scope>INVOLVEMENT IN FCYL</scope>
    <scope>INVOLVEMENT IN MFT1</scope>
</reference>
<reference key="26">
    <citation type="journal article" date="2015" name="Cell Rep.">
        <title>LUBAC-recruited CYLD and A20 regulate gene activation and cell death by exerting opposing effects on linear ubiquitin in signaling complexes.</title>
        <authorList>
            <person name="Draber P."/>
            <person name="Kupka S."/>
            <person name="Reichert M."/>
            <person name="Draberova H."/>
            <person name="Lafont E."/>
            <person name="de Miguel D."/>
            <person name="Spilgies L."/>
            <person name="Surinova S."/>
            <person name="Taraborrelli L."/>
            <person name="Hartwig T."/>
            <person name="Rieser E."/>
            <person name="Martino L."/>
            <person name="Rittinger K."/>
            <person name="Walczak H."/>
        </authorList>
    </citation>
    <scope>FUNCTION</scope>
</reference>
<reference key="27">
    <citation type="journal article" date="2016" name="EMBO J.">
        <title>SPATA2 links CYLD to the TNF-alpha receptor signaling complex and modulates the receptor signaling outcomes.</title>
        <authorList>
            <person name="Wagner S.A."/>
            <person name="Satpathy S."/>
            <person name="Beli P."/>
            <person name="Choudhary C."/>
        </authorList>
    </citation>
    <scope>INTERACTION WITH SPATA2</scope>
</reference>
<reference key="28">
    <citation type="journal article" date="2016" name="EMBO Rep.">
        <title>SPATA2 promotes CYLD activity and regulates TNF-induced NF-kappaB signaling and cell death.</title>
        <authorList>
            <person name="Schlicher L."/>
            <person name="Wissler M."/>
            <person name="Preiss F."/>
            <person name="Brauns-Schubert P."/>
            <person name="Jakob C."/>
            <person name="Dumit V."/>
            <person name="Borner C."/>
            <person name="Dengjel J."/>
            <person name="Maurer U."/>
        </authorList>
    </citation>
    <scope>FUNCTION</scope>
    <scope>CATALYTIC ACTIVITY</scope>
    <scope>INTERACTION WITH SPATA2</scope>
    <scope>MUTAGENESIS OF CYS-601</scope>
</reference>
<reference key="29">
    <citation type="journal article" date="2016" name="Cell Rep.">
        <title>SPATA2-Mediated Binding of CYLD to HOIP Enables CYLD Recruitment to Signaling Complexes.</title>
        <authorList>
            <person name="Kupka S."/>
            <person name="De Miguel D."/>
            <person name="Draber P."/>
            <person name="Martino L."/>
            <person name="Surinova S."/>
            <person name="Rittinger K."/>
            <person name="Walczak H."/>
        </authorList>
    </citation>
    <scope>INTERACTION WITH SPATA2</scope>
</reference>
<reference key="30">
    <citation type="journal article" date="2016" name="Cell Rep.">
        <title>CYLD limits Lys63- and Met1-linked ubiquitin at receptor complexes to regulate innate immune signaling.</title>
        <authorList>
            <person name="Hrdinka M."/>
            <person name="Fiil B.K."/>
            <person name="Zucca M."/>
            <person name="Leske D."/>
            <person name="Bagola K."/>
            <person name="Yabal M."/>
            <person name="Elliott P.R."/>
            <person name="Damgaard R.B."/>
            <person name="Komander D."/>
            <person name="Jost P.J."/>
            <person name="Gyrd-Hansen M."/>
        </authorList>
    </citation>
    <scope>FUNCTION</scope>
    <scope>INTERACTION WITH RNF31</scope>
</reference>
<reference key="31">
    <citation type="journal article" date="2016" name="Mol. Cell">
        <title>SPATA2 links CYLD to LUBAC, activates CYLD, and controls LUBAC signaling.</title>
        <authorList>
            <person name="Elliott P.R."/>
            <person name="Leske D."/>
            <person name="Hrdinka M."/>
            <person name="Bagola K."/>
            <person name="Fiil B.K."/>
            <person name="McLaughlin S.H."/>
            <person name="Wagstaff J."/>
            <person name="Volkmar N."/>
            <person name="Christianson J.C."/>
            <person name="Kessler B.M."/>
            <person name="Freund S.M."/>
            <person name="Komander D."/>
            <person name="Gyrd-Hansen M."/>
        </authorList>
    </citation>
    <scope>FUNCTION</scope>
    <scope>CATALYTIC ACTIVITY</scope>
    <scope>INTERACTION WITH SPATA2</scope>
    <scope>MUTAGENESIS OF LEU-622</scope>
</reference>
<reference key="32">
    <citation type="journal article" date="2016" name="Mol. Cell">
        <title>The K48-K63 branched ubiquitin chain regulates NF-kappaB signaling.</title>
        <authorList>
            <person name="Ohtake F."/>
            <person name="Saeki Y."/>
            <person name="Ishido S."/>
            <person name="Kanno J."/>
            <person name="Tanaka K."/>
        </authorList>
    </citation>
    <scope>FUNCTION</scope>
    <scope>CATALYTIC ACTIVITY</scope>
</reference>
<reference key="33">
    <citation type="journal article" date="2018" name="Nat. Med.">
        <title>The deubiquitinating enzyme cylindromatosis mitigates nonalcoholic steatohepatitis.</title>
        <authorList>
            <person name="Ji Y.X."/>
            <person name="Huang Z."/>
            <person name="Yang X."/>
            <person name="Wang X."/>
            <person name="Zhao L.P."/>
            <person name="Wang P.X."/>
            <person name="Zhang X.J."/>
            <person name="Alves-Bezerra M."/>
            <person name="Cai L."/>
            <person name="Zhang P."/>
            <person name="Lu Y.X."/>
            <person name="Bai L."/>
            <person name="Gao M.M."/>
            <person name="Zhao H."/>
            <person name="Tian S."/>
            <person name="Wang Y."/>
            <person name="Huang Z.X."/>
            <person name="Zhu X.Y."/>
            <person name="Zhang Y."/>
            <person name="Gong J."/>
            <person name="She Z.G."/>
            <person name="Li F."/>
            <person name="Cohen D.E."/>
            <person name="Li H."/>
        </authorList>
    </citation>
    <scope>FUNCTION</scope>
    <scope>TISSUE SPECIFICITY</scope>
    <scope>UBIQUITINATION</scope>
</reference>
<reference key="34">
    <citation type="journal article" date="2021" name="Nat. Cell Biol.">
        <title>TRIM15 and CYLD regulate ERK activation via lysine-63-linked polyubiquitination.</title>
        <authorList>
            <person name="Zhu G."/>
            <person name="Herlyn M."/>
            <person name="Yang X."/>
        </authorList>
    </citation>
    <scope>FUNCTION</scope>
    <scope>CATALYTIC ACTIVITY</scope>
</reference>
<reference key="35">
    <citation type="journal article" date="2004" name="Structure">
        <title>The CAP-Gly domain of CYLD associates with the proline-rich sequence in NEMO/IKKgamma.</title>
        <authorList>
            <person name="Saito K."/>
            <person name="Kigawa T."/>
            <person name="Koshiba S."/>
            <person name="Sato K."/>
            <person name="Matsuo Y."/>
            <person name="Sakamoto A."/>
            <person name="Takagi T."/>
            <person name="Shirouzu M."/>
            <person name="Yabuki T."/>
            <person name="Nunokawa E."/>
            <person name="Seki E."/>
            <person name="Matsuda T."/>
            <person name="Aoki M."/>
            <person name="Miyata Y."/>
            <person name="Hirakawa N."/>
            <person name="Inoue M."/>
            <person name="Terada T."/>
            <person name="Nagase T."/>
            <person name="Kikuno R."/>
            <person name="Nakayama M."/>
            <person name="Ohara O."/>
            <person name="Tanaka A."/>
            <person name="Yokoyama S."/>
        </authorList>
    </citation>
    <scope>STRUCTURE BY NMR OF 460-550</scope>
    <scope>INTERACTION WITH IKBKG</scope>
</reference>
<reference key="36">
    <citation type="submission" date="2004-11" db="PDB data bank">
        <title>Solution structure of the 1st and 2nd CAP-Gly domains in human cylindromatosis tumor suppressor CYLD.</title>
        <authorList>
            <consortium name="RIKEN structural genomics initiative (RSGI)"/>
        </authorList>
    </citation>
    <scope>STRUCTURE BY NMR OF 125-304</scope>
</reference>
<reference key="37">
    <citation type="journal article" date="2008" name="Mol. Cell">
        <title>The structure of the CYLD USP domain explains its specificity for Lys63-linked polyubiquitin and reveals a B box module.</title>
        <authorList>
            <person name="Komander D."/>
            <person name="Lord C.J."/>
            <person name="Scheel H."/>
            <person name="Swift S."/>
            <person name="Hofmann K."/>
            <person name="Ashworth A."/>
            <person name="Barford D."/>
        </authorList>
    </citation>
    <scope>X-RAY CRYSTALLOGRAPHY (2.8 ANGSTROMS) OF 583-956 IN COMPLEX WITH ZINC IONS</scope>
    <scope>FUNCTION</scope>
    <scope>ACTIVE SITE</scope>
    <scope>MUTAGENESIS OF CYS-601</scope>
    <scope>CATALYTIC ACTIVITY</scope>
    <scope>SUBCELLULAR LOCATION</scope>
</reference>
<reference key="38">
    <citation type="journal article" date="2003" name="J. Invest. Dermatol.">
        <title>A novel missense mutation in CYLD in a family with Brooke-Spiegler syndrome.</title>
        <authorList>
            <person name="Hu G."/>
            <person name="Oender M."/>
            <person name="Gill M."/>
            <person name="Aksakal B."/>
            <person name="Oeztas M."/>
            <person name="Guerer M.A."/>
            <person name="Celebi J.T."/>
        </authorList>
    </citation>
    <scope>VARIANT MFT1 GLY-747</scope>
    <scope>VARIANT BRSS GLY-747</scope>
</reference>
<reference key="39">
    <citation type="journal article" date="2013" name="Acta Neuropathol.">
        <title>Frontotemporal dementia-amyotrophic lateral sclerosis syndrome locus on chromosome 16p12.1-q12.2: genetic, clinical and neuropathological analysis.</title>
        <authorList>
            <person name="Dobson-Stone C."/>
            <person name="Luty A.A."/>
            <person name="Thompson E.M."/>
            <person name="Blumbergs P."/>
            <person name="Brooks W.S."/>
            <person name="Short C.L."/>
            <person name="Field C.D."/>
            <person name="Panegyres P.K."/>
            <person name="Hecker J."/>
            <person name="Solski J.A."/>
            <person name="Blair I.P."/>
            <person name="Fullerton J.M."/>
            <person name="Halliday G.M."/>
            <person name="Schofield P.R."/>
            <person name="Kwok J.B."/>
        </authorList>
    </citation>
    <scope>INVOLVEMENT IN FTDALS8</scope>
    <scope>VARIANT FTDALS8 VAL-719</scope>
</reference>
<reference key="40">
    <citation type="journal article" date="2020" name="Brain">
        <title>CYLD variants in frontotemporal dementia associated with severe memory impairment in a Portuguese cohort.</title>
        <authorList>
            <person name="Tabuas-Pereira M."/>
            <person name="Santana I."/>
            <person name="Kun-Rodrigues C."/>
            <person name="Bras J."/>
            <person name="Guerreiro R."/>
        </authorList>
    </citation>
    <scope>VARIANTS FTDALS8 SER-229 AND PHE-615</scope>
</reference>
<reference key="41">
    <citation type="journal article" date="2020" name="Brain">
        <title>CYLD is a causative gene for frontotemporal dementia - amyotrophic lateral sclerosis.</title>
        <authorList>
            <person name="Dobson-Stone C."/>
            <person name="Hallupp M."/>
            <person name="Shahheydari H."/>
            <person name="Ragagnin A.M.G."/>
            <person name="Chatterton Z."/>
            <person name="Carew-Jones F."/>
            <person name="Shepherd C.E."/>
            <person name="Stefen H."/>
            <person name="Paric E."/>
            <person name="Fath T."/>
            <person name="Thompson E.M."/>
            <person name="Blumbergs P."/>
            <person name="Short C.L."/>
            <person name="Field C.D."/>
            <person name="Panegyres P.K."/>
            <person name="Hecker J."/>
            <person name="Nicholson G."/>
            <person name="Shaw A.D."/>
            <person name="Fullerton J.M."/>
            <person name="Luty A.A."/>
            <person name="Schofield P.R."/>
            <person name="Brooks W.S."/>
            <person name="Rajan N."/>
            <person name="Bennett M.F."/>
            <person name="Bahlo M."/>
            <person name="Landers J.E."/>
            <person name="Piguet O."/>
            <person name="Hodges J.R."/>
            <person name="Halliday G.M."/>
            <person name="Topp S.D."/>
            <person name="Smith B.N."/>
            <person name="Shaw C.E."/>
            <person name="McCann E."/>
            <person name="Fifita J.A."/>
            <person name="Williams K.L."/>
            <person name="Atkin J.D."/>
            <person name="Blair I.P."/>
            <person name="Kwok J.B."/>
        </authorList>
    </citation>
    <scope>CHARACTERIZATION OF VARIANT FTDALS8 VAL-719</scope>
    <scope>CHARACTERIZATION OF VARIANT GLY-681</scope>
    <scope>FUNCTION</scope>
    <scope>CATALYTIC ACTIVITY</scope>
    <scope>INTERACTION WITH TBK1; OPTN AND SQSTM1</scope>
    <scope>SUBCELLULAR LOCATION</scope>
</reference>
<gene>
    <name evidence="39 43" type="primary">CYLD</name>
    <name type="synonym">CYLD1</name>
    <name evidence="38" type="synonym">KIAA0849</name>
    <name type="ORF">HSPC057</name>
</gene>
<dbReference type="EC" id="3.4.19.12" evidence="20 30 32 33 35 37"/>
<dbReference type="EMBL" id="AJ250014">
    <property type="protein sequence ID" value="CAB93533.1"/>
    <property type="molecule type" value="mRNA"/>
</dbReference>
<dbReference type="EMBL" id="AB020656">
    <property type="protein sequence ID" value="BAA74872.2"/>
    <property type="status" value="ALT_INIT"/>
    <property type="molecule type" value="mRNA"/>
</dbReference>
<dbReference type="EMBL" id="BC012342">
    <property type="protein sequence ID" value="AAH12342.1"/>
    <property type="molecule type" value="mRNA"/>
</dbReference>
<dbReference type="EMBL" id="AF161542">
    <property type="protein sequence ID" value="AAF29029.1"/>
    <property type="status" value="ALT_FRAME"/>
    <property type="molecule type" value="mRNA"/>
</dbReference>
<dbReference type="CCDS" id="CCDS42164.1">
    <molecule id="Q9NQC7-2"/>
</dbReference>
<dbReference type="CCDS" id="CCDS45482.1">
    <molecule id="Q9NQC7-1"/>
</dbReference>
<dbReference type="RefSeq" id="NP_001035814.1">
    <molecule id="Q9NQC7-2"/>
    <property type="nucleotide sequence ID" value="NM_001042355.2"/>
</dbReference>
<dbReference type="RefSeq" id="NP_001035877.1">
    <molecule id="Q9NQC7-2"/>
    <property type="nucleotide sequence ID" value="NM_001042412.3"/>
</dbReference>
<dbReference type="RefSeq" id="NP_001365672.1">
    <molecule id="Q9NQC7-1"/>
    <property type="nucleotide sequence ID" value="NM_001378743.1"/>
</dbReference>
<dbReference type="RefSeq" id="NP_001365673.1">
    <molecule id="Q9NQC7-2"/>
    <property type="nucleotide sequence ID" value="NM_001378744.1"/>
</dbReference>
<dbReference type="RefSeq" id="NP_001365674.1">
    <molecule id="Q9NQC7-2"/>
    <property type="nucleotide sequence ID" value="NM_001378745.1"/>
</dbReference>
<dbReference type="RefSeq" id="NP_001365675.1">
    <molecule id="Q9NQC7-2"/>
    <property type="nucleotide sequence ID" value="NM_001378746.1"/>
</dbReference>
<dbReference type="RefSeq" id="NP_001365676.1">
    <molecule id="Q9NQC7-2"/>
    <property type="nucleotide sequence ID" value="NM_001378747.1"/>
</dbReference>
<dbReference type="RefSeq" id="NP_001365677.1">
    <molecule id="Q9NQC7-2"/>
    <property type="nucleotide sequence ID" value="NM_001378748.1"/>
</dbReference>
<dbReference type="RefSeq" id="NP_001365678.1">
    <molecule id="Q9NQC7-2"/>
    <property type="nucleotide sequence ID" value="NM_001378749.1"/>
</dbReference>
<dbReference type="RefSeq" id="NP_001365679.1">
    <molecule id="Q9NQC7-2"/>
    <property type="nucleotide sequence ID" value="NM_001378750.1"/>
</dbReference>
<dbReference type="RefSeq" id="NP_056062.1">
    <molecule id="Q9NQC7-1"/>
    <property type="nucleotide sequence ID" value="NM_015247.3"/>
</dbReference>
<dbReference type="RefSeq" id="XP_005255869.1">
    <property type="nucleotide sequence ID" value="XM_005255812.2"/>
</dbReference>
<dbReference type="RefSeq" id="XP_006721212.1">
    <property type="nucleotide sequence ID" value="XM_006721149.1"/>
</dbReference>
<dbReference type="RefSeq" id="XP_011521209.1">
    <property type="nucleotide sequence ID" value="XM_011522907.2"/>
</dbReference>
<dbReference type="RefSeq" id="XP_016878466.1">
    <property type="nucleotide sequence ID" value="XM_017022977.1"/>
</dbReference>
<dbReference type="RefSeq" id="XP_016878467.1">
    <property type="nucleotide sequence ID" value="XM_017022978.1"/>
</dbReference>
<dbReference type="RefSeq" id="XP_016878468.1">
    <property type="nucleotide sequence ID" value="XM_017022979.1"/>
</dbReference>
<dbReference type="RefSeq" id="XP_016878469.1">
    <property type="nucleotide sequence ID" value="XM_017022980.1"/>
</dbReference>
<dbReference type="RefSeq" id="XP_047289612.1">
    <molecule id="Q9NQC7-2"/>
    <property type="nucleotide sequence ID" value="XM_047433656.1"/>
</dbReference>
<dbReference type="RefSeq" id="XP_047289614.1">
    <molecule id="Q9NQC7-2"/>
    <property type="nucleotide sequence ID" value="XM_047433658.1"/>
</dbReference>
<dbReference type="RefSeq" id="XP_047289615.1">
    <molecule id="Q9NQC7-2"/>
    <property type="nucleotide sequence ID" value="XM_047433659.1"/>
</dbReference>
<dbReference type="RefSeq" id="XP_054235669.1">
    <molecule id="Q9NQC7-2"/>
    <property type="nucleotide sequence ID" value="XM_054379694.1"/>
</dbReference>
<dbReference type="RefSeq" id="XP_054235670.1">
    <molecule id="Q9NQC7-2"/>
    <property type="nucleotide sequence ID" value="XM_054379695.1"/>
</dbReference>
<dbReference type="RefSeq" id="XP_054235671.1">
    <molecule id="Q9NQC7-2"/>
    <property type="nucleotide sequence ID" value="XM_054379696.1"/>
</dbReference>
<dbReference type="PDB" id="1IXD">
    <property type="method" value="NMR"/>
    <property type="chains" value="A=460-550"/>
</dbReference>
<dbReference type="PDB" id="1WHL">
    <property type="method" value="NMR"/>
    <property type="chains" value="A=125-206"/>
</dbReference>
<dbReference type="PDB" id="1WHM">
    <property type="method" value="NMR"/>
    <property type="chains" value="A=228-304"/>
</dbReference>
<dbReference type="PDB" id="2VHF">
    <property type="method" value="X-ray"/>
    <property type="resolution" value="2.80 A"/>
    <property type="chains" value="A/B=583-956"/>
</dbReference>
<dbReference type="PDB" id="7OWC">
    <property type="method" value="X-ray"/>
    <property type="resolution" value="1.85 A"/>
    <property type="chains" value="B/D=467-565"/>
</dbReference>
<dbReference type="PDB" id="7OWD">
    <property type="method" value="X-ray"/>
    <property type="resolution" value="1.71 A"/>
    <property type="chains" value="B=467-552"/>
</dbReference>
<dbReference type="PDBsum" id="1IXD"/>
<dbReference type="PDBsum" id="1WHL"/>
<dbReference type="PDBsum" id="1WHM"/>
<dbReference type="PDBsum" id="2VHF"/>
<dbReference type="PDBsum" id="7OWC"/>
<dbReference type="PDBsum" id="7OWD"/>
<dbReference type="SMR" id="Q9NQC7"/>
<dbReference type="BioGRID" id="107920">
    <property type="interactions" value="862"/>
</dbReference>
<dbReference type="CORUM" id="Q9NQC7"/>
<dbReference type="FunCoup" id="Q9NQC7">
    <property type="interactions" value="1533"/>
</dbReference>
<dbReference type="IntAct" id="Q9NQC7">
    <property type="interactions" value="75"/>
</dbReference>
<dbReference type="MINT" id="Q9NQC7"/>
<dbReference type="STRING" id="9606.ENSP00000392025"/>
<dbReference type="BindingDB" id="Q9NQC7"/>
<dbReference type="ChEMBL" id="CHEMBL4630858"/>
<dbReference type="MEROPS" id="C67.001"/>
<dbReference type="GlyGen" id="Q9NQC7">
    <property type="glycosylation" value="2 sites, 1 O-linked glycan (1 site)"/>
</dbReference>
<dbReference type="iPTMnet" id="Q9NQC7"/>
<dbReference type="PhosphoSitePlus" id="Q9NQC7"/>
<dbReference type="BioMuta" id="CYLD"/>
<dbReference type="DMDM" id="51316104"/>
<dbReference type="jPOST" id="Q9NQC7"/>
<dbReference type="MassIVE" id="Q9NQC7"/>
<dbReference type="PaxDb" id="9606-ENSP00000392025"/>
<dbReference type="PeptideAtlas" id="Q9NQC7"/>
<dbReference type="ProteomicsDB" id="82139">
    <molecule id="Q9NQC7-1"/>
</dbReference>
<dbReference type="ProteomicsDB" id="82140">
    <molecule id="Q9NQC7-2"/>
</dbReference>
<dbReference type="Pumba" id="Q9NQC7"/>
<dbReference type="Antibodypedia" id="3193">
    <property type="antibodies" value="310 antibodies from 38 providers"/>
</dbReference>
<dbReference type="DNASU" id="1540"/>
<dbReference type="Ensembl" id="ENST00000311559.13">
    <molecule id="Q9NQC7-1"/>
    <property type="protein sequence ID" value="ENSP00000308928.9"/>
    <property type="gene ID" value="ENSG00000083799.18"/>
</dbReference>
<dbReference type="Ensembl" id="ENST00000398568.6">
    <molecule id="Q9NQC7-2"/>
    <property type="protein sequence ID" value="ENSP00000381574.2"/>
    <property type="gene ID" value="ENSG00000083799.18"/>
</dbReference>
<dbReference type="Ensembl" id="ENST00000427738.8">
    <molecule id="Q9NQC7-1"/>
    <property type="protein sequence ID" value="ENSP00000392025.3"/>
    <property type="gene ID" value="ENSG00000083799.18"/>
</dbReference>
<dbReference type="Ensembl" id="ENST00000564326.5">
    <molecule id="Q9NQC7-2"/>
    <property type="protein sequence ID" value="ENSP00000454515.1"/>
    <property type="gene ID" value="ENSG00000083799.18"/>
</dbReference>
<dbReference type="Ensembl" id="ENST00000569418.5">
    <molecule id="Q9NQC7-2"/>
    <property type="protein sequence ID" value="ENSP00000457576.1"/>
    <property type="gene ID" value="ENSG00000083799.18"/>
</dbReference>
<dbReference type="GeneID" id="1540"/>
<dbReference type="KEGG" id="hsa:1540"/>
<dbReference type="MANE-Select" id="ENST00000427738.8">
    <property type="protein sequence ID" value="ENSP00000392025.3"/>
    <property type="RefSeq nucleotide sequence ID" value="NM_001378743.1"/>
    <property type="RefSeq protein sequence ID" value="NP_001365672.1"/>
</dbReference>
<dbReference type="UCSC" id="uc002egq.2">
    <molecule id="Q9NQC7-1"/>
    <property type="organism name" value="human"/>
</dbReference>
<dbReference type="AGR" id="HGNC:2584"/>
<dbReference type="CTD" id="1540"/>
<dbReference type="DisGeNET" id="1540"/>
<dbReference type="GeneCards" id="CYLD"/>
<dbReference type="GeneReviews" id="CYLD"/>
<dbReference type="HGNC" id="HGNC:2584">
    <property type="gene designation" value="CYLD"/>
</dbReference>
<dbReference type="HPA" id="ENSG00000083799">
    <property type="expression patterns" value="Tissue enhanced (bone)"/>
</dbReference>
<dbReference type="MalaCards" id="CYLD"/>
<dbReference type="MIM" id="132700">
    <property type="type" value="phenotype"/>
</dbReference>
<dbReference type="MIM" id="601606">
    <property type="type" value="phenotype"/>
</dbReference>
<dbReference type="MIM" id="605018">
    <property type="type" value="gene"/>
</dbReference>
<dbReference type="MIM" id="605041">
    <property type="type" value="phenotype"/>
</dbReference>
<dbReference type="MIM" id="619132">
    <property type="type" value="phenotype"/>
</dbReference>
<dbReference type="neXtProt" id="NX_Q9NQC7"/>
<dbReference type="OpenTargets" id="ENSG00000083799"/>
<dbReference type="Orphanet" id="211">
    <property type="disease" value="Familial cylindromatosis"/>
</dbReference>
<dbReference type="Orphanet" id="867">
    <property type="disease" value="Familial multiple trichoepithelioma"/>
</dbReference>
<dbReference type="PharmGKB" id="PA27084"/>
<dbReference type="VEuPathDB" id="HostDB:ENSG00000083799"/>
<dbReference type="eggNOG" id="KOG3556">
    <property type="taxonomic scope" value="Eukaryota"/>
</dbReference>
<dbReference type="GeneTree" id="ENSGT00390000018123"/>
<dbReference type="InParanoid" id="Q9NQC7"/>
<dbReference type="OMA" id="SPWYIDE"/>
<dbReference type="OrthoDB" id="6287070at2759"/>
<dbReference type="PAN-GO" id="Q9NQC7">
    <property type="GO annotations" value="9 GO annotations based on evolutionary models"/>
</dbReference>
<dbReference type="PhylomeDB" id="Q9NQC7"/>
<dbReference type="TreeFam" id="TF318734"/>
<dbReference type="PathwayCommons" id="Q9NQC7"/>
<dbReference type="Reactome" id="R-HSA-168638">
    <property type="pathway name" value="NOD1/2 Signaling Pathway"/>
</dbReference>
<dbReference type="Reactome" id="R-HSA-5357786">
    <property type="pathway name" value="TNFR1-induced proapoptotic signaling"/>
</dbReference>
<dbReference type="Reactome" id="R-HSA-5357905">
    <property type="pathway name" value="Regulation of TNFR1 signaling"/>
</dbReference>
<dbReference type="Reactome" id="R-HSA-5357956">
    <property type="pathway name" value="TNFR1-induced NF-kappa-B signaling pathway"/>
</dbReference>
<dbReference type="Reactome" id="R-HSA-5689880">
    <property type="pathway name" value="Ub-specific processing proteases"/>
</dbReference>
<dbReference type="Reactome" id="R-HSA-936440">
    <property type="pathway name" value="Negative regulators of DDX58/IFIH1 signaling"/>
</dbReference>
<dbReference type="SignaLink" id="Q9NQC7"/>
<dbReference type="SIGNOR" id="Q9NQC7"/>
<dbReference type="BioGRID-ORCS" id="1540">
    <property type="hits" value="34 hits in 1214 CRISPR screens"/>
</dbReference>
<dbReference type="CD-CODE" id="FB4E32DD">
    <property type="entry name" value="Presynaptic clusters and postsynaptic densities"/>
</dbReference>
<dbReference type="ChiTaRS" id="CYLD">
    <property type="organism name" value="human"/>
</dbReference>
<dbReference type="EvolutionaryTrace" id="Q9NQC7"/>
<dbReference type="GeneWiki" id="CYLD_(gene)"/>
<dbReference type="GenomeRNAi" id="1540"/>
<dbReference type="Pharos" id="Q9NQC7">
    <property type="development level" value="Tbio"/>
</dbReference>
<dbReference type="PRO" id="PR:Q9NQC7"/>
<dbReference type="Proteomes" id="UP000005640">
    <property type="component" value="Chromosome 16"/>
</dbReference>
<dbReference type="RNAct" id="Q9NQC7">
    <property type="molecule type" value="protein"/>
</dbReference>
<dbReference type="Bgee" id="ENSG00000083799">
    <property type="expression patterns" value="Expressed in lateral nuclear group of thalamus and 208 other cell types or tissues"/>
</dbReference>
<dbReference type="ExpressionAtlas" id="Q9NQC7">
    <property type="expression patterns" value="baseline and differential"/>
</dbReference>
<dbReference type="GO" id="GO:0034451">
    <property type="term" value="C:centriolar satellite"/>
    <property type="evidence" value="ECO:0000314"/>
    <property type="project" value="HPA"/>
</dbReference>
<dbReference type="GO" id="GO:0005813">
    <property type="term" value="C:centrosome"/>
    <property type="evidence" value="ECO:0000314"/>
    <property type="project" value="UniProtKB"/>
</dbReference>
<dbReference type="GO" id="GO:0036064">
    <property type="term" value="C:ciliary basal body"/>
    <property type="evidence" value="ECO:0000314"/>
    <property type="project" value="HPA"/>
</dbReference>
<dbReference type="GO" id="GO:0097542">
    <property type="term" value="C:ciliary tip"/>
    <property type="evidence" value="ECO:0000250"/>
    <property type="project" value="UniProtKB"/>
</dbReference>
<dbReference type="GO" id="GO:0005829">
    <property type="term" value="C:cytosol"/>
    <property type="evidence" value="ECO:0000314"/>
    <property type="project" value="UniProtKB"/>
</dbReference>
<dbReference type="GO" id="GO:0005874">
    <property type="term" value="C:microtubule"/>
    <property type="evidence" value="ECO:0007669"/>
    <property type="project" value="UniProtKB-KW"/>
</dbReference>
<dbReference type="GO" id="GO:0005654">
    <property type="term" value="C:nucleoplasm"/>
    <property type="evidence" value="ECO:0000314"/>
    <property type="project" value="HPA"/>
</dbReference>
<dbReference type="GO" id="GO:0048471">
    <property type="term" value="C:perinuclear region of cytoplasm"/>
    <property type="evidence" value="ECO:0007669"/>
    <property type="project" value="UniProtKB-SubCell"/>
</dbReference>
<dbReference type="GO" id="GO:0005886">
    <property type="term" value="C:plasma membrane"/>
    <property type="evidence" value="ECO:0007669"/>
    <property type="project" value="UniProtKB-SubCell"/>
</dbReference>
<dbReference type="GO" id="GO:0005819">
    <property type="term" value="C:spindle"/>
    <property type="evidence" value="ECO:0000314"/>
    <property type="project" value="UniProtKB"/>
</dbReference>
<dbReference type="GO" id="GO:0004843">
    <property type="term" value="F:cysteine-type deubiquitinase activity"/>
    <property type="evidence" value="ECO:0000314"/>
    <property type="project" value="UniProtKB"/>
</dbReference>
<dbReference type="GO" id="GO:1990380">
    <property type="term" value="F:K48-linked deubiquitinase activity"/>
    <property type="evidence" value="ECO:0007669"/>
    <property type="project" value="Ensembl"/>
</dbReference>
<dbReference type="GO" id="GO:0061578">
    <property type="term" value="F:K63-linked deubiquitinase activity"/>
    <property type="evidence" value="ECO:0000314"/>
    <property type="project" value="UniProtKB"/>
</dbReference>
<dbReference type="GO" id="GO:0061815">
    <property type="term" value="F:Met1-linked polyubiquitin deubiquitinase activity"/>
    <property type="evidence" value="ECO:0000269"/>
    <property type="project" value="Reactome"/>
</dbReference>
<dbReference type="GO" id="GO:0070064">
    <property type="term" value="F:proline-rich region binding"/>
    <property type="evidence" value="ECO:0000353"/>
    <property type="project" value="UniProtKB"/>
</dbReference>
<dbReference type="GO" id="GO:0019901">
    <property type="term" value="F:protein kinase binding"/>
    <property type="evidence" value="ECO:0000353"/>
    <property type="project" value="UniProtKB"/>
</dbReference>
<dbReference type="GO" id="GO:0008270">
    <property type="term" value="F:zinc ion binding"/>
    <property type="evidence" value="ECO:0000314"/>
    <property type="project" value="UniProtKB"/>
</dbReference>
<dbReference type="GO" id="GO:0043369">
    <property type="term" value="P:CD4-positive or CD8-positive, alpha-beta T cell lineage commitment"/>
    <property type="evidence" value="ECO:0007669"/>
    <property type="project" value="Ensembl"/>
</dbReference>
<dbReference type="GO" id="GO:0048872">
    <property type="term" value="P:homeostasis of number of cells"/>
    <property type="evidence" value="ECO:0007669"/>
    <property type="project" value="Ensembl"/>
</dbReference>
<dbReference type="GO" id="GO:0045087">
    <property type="term" value="P:innate immune response"/>
    <property type="evidence" value="ECO:0000314"/>
    <property type="project" value="UniProtKB"/>
</dbReference>
<dbReference type="GO" id="GO:0070266">
    <property type="term" value="P:necroptotic process"/>
    <property type="evidence" value="ECO:0000318"/>
    <property type="project" value="GO_Central"/>
</dbReference>
<dbReference type="GO" id="GO:0043124">
    <property type="term" value="P:negative regulation of canonical NF-kappaB signal transduction"/>
    <property type="evidence" value="ECO:0000314"/>
    <property type="project" value="UniProtKB"/>
</dbReference>
<dbReference type="GO" id="GO:0090090">
    <property type="term" value="P:negative regulation of canonical Wnt signaling pathway"/>
    <property type="evidence" value="ECO:0000315"/>
    <property type="project" value="UniProtKB"/>
</dbReference>
<dbReference type="GO" id="GO:0050728">
    <property type="term" value="P:negative regulation of inflammatory response"/>
    <property type="evidence" value="ECO:0000250"/>
    <property type="project" value="UniProtKB"/>
</dbReference>
<dbReference type="GO" id="GO:2000493">
    <property type="term" value="P:negative regulation of interleukin-18-mediated signaling pathway"/>
    <property type="evidence" value="ECO:0000250"/>
    <property type="project" value="UniProtKB"/>
</dbReference>
<dbReference type="GO" id="GO:0046329">
    <property type="term" value="P:negative regulation of JNK cascade"/>
    <property type="evidence" value="ECO:0000314"/>
    <property type="project" value="UniProtKB"/>
</dbReference>
<dbReference type="GO" id="GO:0032088">
    <property type="term" value="P:negative regulation of NF-kappaB transcription factor activity"/>
    <property type="evidence" value="ECO:0000314"/>
    <property type="project" value="UniProtKB"/>
</dbReference>
<dbReference type="GO" id="GO:1901223">
    <property type="term" value="P:negative regulation of non-canonical NF-kappaB signal transduction"/>
    <property type="evidence" value="ECO:0000314"/>
    <property type="project" value="UniProtKB"/>
</dbReference>
<dbReference type="GO" id="GO:1903753">
    <property type="term" value="P:negative regulation of p38MAPK cascade"/>
    <property type="evidence" value="ECO:0000314"/>
    <property type="project" value="UniProtKB"/>
</dbReference>
<dbReference type="GO" id="GO:0032480">
    <property type="term" value="P:negative regulation of type I interferon production"/>
    <property type="evidence" value="ECO:0000304"/>
    <property type="project" value="Reactome"/>
</dbReference>
<dbReference type="GO" id="GO:0035872">
    <property type="term" value="P:nucleotide-binding domain, leucine rich repeat containing receptor signaling pathway"/>
    <property type="evidence" value="ECO:0000304"/>
    <property type="project" value="Reactome"/>
</dbReference>
<dbReference type="GO" id="GO:2001238">
    <property type="term" value="P:positive regulation of extrinsic apoptotic signaling pathway"/>
    <property type="evidence" value="ECO:0000315"/>
    <property type="project" value="UniProtKB"/>
</dbReference>
<dbReference type="GO" id="GO:1903829">
    <property type="term" value="P:positive regulation of protein localization"/>
    <property type="evidence" value="ECO:0007669"/>
    <property type="project" value="Ensembl"/>
</dbReference>
<dbReference type="GO" id="GO:0045582">
    <property type="term" value="P:positive regulation of T cell differentiation"/>
    <property type="evidence" value="ECO:0007669"/>
    <property type="project" value="Ensembl"/>
</dbReference>
<dbReference type="GO" id="GO:0050862">
    <property type="term" value="P:positive regulation of T cell receptor signaling pathway"/>
    <property type="evidence" value="ECO:0007669"/>
    <property type="project" value="Ensembl"/>
</dbReference>
<dbReference type="GO" id="GO:0016579">
    <property type="term" value="P:protein deubiquitination"/>
    <property type="evidence" value="ECO:0000314"/>
    <property type="project" value="UniProtKB"/>
</dbReference>
<dbReference type="GO" id="GO:0070536">
    <property type="term" value="P:protein K63-linked deubiquitination"/>
    <property type="evidence" value="ECO:0000318"/>
    <property type="project" value="GO_Central"/>
</dbReference>
<dbReference type="GO" id="GO:1990108">
    <property type="term" value="P:protein linear deubiquitination"/>
    <property type="evidence" value="ECO:0000314"/>
    <property type="project" value="UniProtKB"/>
</dbReference>
<dbReference type="GO" id="GO:0006508">
    <property type="term" value="P:proteolysis"/>
    <property type="evidence" value="ECO:0007669"/>
    <property type="project" value="UniProtKB-KW"/>
</dbReference>
<dbReference type="GO" id="GO:0045577">
    <property type="term" value="P:regulation of B cell differentiation"/>
    <property type="evidence" value="ECO:0007669"/>
    <property type="project" value="Ensembl"/>
</dbReference>
<dbReference type="GO" id="GO:1902017">
    <property type="term" value="P:regulation of cilium assembly"/>
    <property type="evidence" value="ECO:0000250"/>
    <property type="project" value="UniProtKB"/>
</dbReference>
<dbReference type="GO" id="GO:0050727">
    <property type="term" value="P:regulation of inflammatory response"/>
    <property type="evidence" value="ECO:0000314"/>
    <property type="project" value="UniProtKB"/>
</dbReference>
<dbReference type="GO" id="GO:2001242">
    <property type="term" value="P:regulation of intrinsic apoptotic signaling pathway"/>
    <property type="evidence" value="ECO:0000315"/>
    <property type="project" value="UniProtKB"/>
</dbReference>
<dbReference type="GO" id="GO:0070507">
    <property type="term" value="P:regulation of microtubule cytoskeleton organization"/>
    <property type="evidence" value="ECO:0000315"/>
    <property type="project" value="UniProtKB"/>
</dbReference>
<dbReference type="GO" id="GO:0007346">
    <property type="term" value="P:regulation of mitotic cell cycle"/>
    <property type="evidence" value="ECO:0000315"/>
    <property type="project" value="UniProtKB"/>
</dbReference>
<dbReference type="GO" id="GO:0060544">
    <property type="term" value="P:regulation of necroptotic process"/>
    <property type="evidence" value="ECO:0000314"/>
    <property type="project" value="UniProtKB"/>
</dbReference>
<dbReference type="GO" id="GO:0010803">
    <property type="term" value="P:regulation of tumor necrosis factor-mediated signaling pathway"/>
    <property type="evidence" value="ECO:0000314"/>
    <property type="project" value="UniProtKB"/>
</dbReference>
<dbReference type="GO" id="GO:1901026">
    <property type="term" value="P:ripoptosome assembly involved in necroptotic process"/>
    <property type="evidence" value="ECO:0007669"/>
    <property type="project" value="Ensembl"/>
</dbReference>
<dbReference type="GO" id="GO:0016055">
    <property type="term" value="P:Wnt signaling pathway"/>
    <property type="evidence" value="ECO:0007669"/>
    <property type="project" value="UniProtKB-KW"/>
</dbReference>
<dbReference type="CDD" id="cd02670">
    <property type="entry name" value="Peptidase_C19N"/>
    <property type="match status" value="1"/>
</dbReference>
<dbReference type="FunFam" id="2.30.30.190:FF:000004">
    <property type="entry name" value="Putative ubiquitin carboxyl-terminal hydrolase CYLD"/>
    <property type="match status" value="1"/>
</dbReference>
<dbReference type="FunFam" id="2.30.30.190:FF:000006">
    <property type="entry name" value="Putative ubiquitin carboxyl-terminal hydrolase CYLD"/>
    <property type="match status" value="1"/>
</dbReference>
<dbReference type="FunFam" id="2.30.30.190:FF:000007">
    <property type="entry name" value="Putative ubiquitin carboxyl-terminal hydrolase CYLD"/>
    <property type="match status" value="1"/>
</dbReference>
<dbReference type="FunFam" id="3.90.70.10:FF:000009">
    <property type="entry name" value="Putative ubiquitin carboxyl-terminal hydrolase CYLD"/>
    <property type="match status" value="1"/>
</dbReference>
<dbReference type="Gene3D" id="2.30.30.190">
    <property type="entry name" value="CAP Gly-rich-like domain"/>
    <property type="match status" value="3"/>
</dbReference>
<dbReference type="Gene3D" id="3.90.70.10">
    <property type="entry name" value="Cysteine proteinases"/>
    <property type="match status" value="1"/>
</dbReference>
<dbReference type="InterPro" id="IPR036859">
    <property type="entry name" value="CAP-Gly_dom_sf"/>
</dbReference>
<dbReference type="InterPro" id="IPR000938">
    <property type="entry name" value="CAP-Gly_domain"/>
</dbReference>
<dbReference type="InterPro" id="IPR038765">
    <property type="entry name" value="Papain-like_cys_pep_sf"/>
</dbReference>
<dbReference type="InterPro" id="IPR001394">
    <property type="entry name" value="Peptidase_C19_UCH"/>
</dbReference>
<dbReference type="InterPro" id="IPR018200">
    <property type="entry name" value="USP_CS"/>
</dbReference>
<dbReference type="InterPro" id="IPR028889">
    <property type="entry name" value="USP_dom"/>
</dbReference>
<dbReference type="PANTHER" id="PTHR11830">
    <property type="entry name" value="40S RIBOSOMAL PROTEIN S3A"/>
    <property type="match status" value="1"/>
</dbReference>
<dbReference type="Pfam" id="PF01302">
    <property type="entry name" value="CAP_GLY"/>
    <property type="match status" value="2"/>
</dbReference>
<dbReference type="Pfam" id="PF16607">
    <property type="entry name" value="CYLD_phos_site"/>
    <property type="match status" value="1"/>
</dbReference>
<dbReference type="Pfam" id="PF00443">
    <property type="entry name" value="UCH"/>
    <property type="match status" value="1"/>
</dbReference>
<dbReference type="SMART" id="SM01052">
    <property type="entry name" value="CAP_GLY"/>
    <property type="match status" value="3"/>
</dbReference>
<dbReference type="SUPFAM" id="SSF74924">
    <property type="entry name" value="Cap-Gly domain"/>
    <property type="match status" value="3"/>
</dbReference>
<dbReference type="SUPFAM" id="SSF54001">
    <property type="entry name" value="Cysteine proteinases"/>
    <property type="match status" value="1"/>
</dbReference>
<dbReference type="PROSITE" id="PS00845">
    <property type="entry name" value="CAP_GLY_1"/>
    <property type="match status" value="1"/>
</dbReference>
<dbReference type="PROSITE" id="PS50245">
    <property type="entry name" value="CAP_GLY_2"/>
    <property type="match status" value="2"/>
</dbReference>
<dbReference type="PROSITE" id="PS00972">
    <property type="entry name" value="USP_1"/>
    <property type="match status" value="1"/>
</dbReference>
<dbReference type="PROSITE" id="PS50235">
    <property type="entry name" value="USP_3"/>
    <property type="match status" value="1"/>
</dbReference>
<comment type="function">
    <text evidence="1 7 8 9 18 19 20 21 22 23 24 27 28 30 32 33 34 35 37">Deubiquitinase that specifically cleaves 'Lys-63'- and linear 'Met-1'-linked polyubiquitin chains and is involved in NF-kappa-B activation and TNF-alpha-induced necroptosis (PubMed:18313383, PubMed:18636086, PubMed:26670046, PubMed:26997266, PubMed:27458237, PubMed:27591049, PubMed:27746020, PubMed:29291351, PubMed:32185393). Negatively regulates NF-kappa-B activation by deubiquitinating upstream signaling factors (PubMed:12917689, PubMed:12917691, PubMed:32185393). Contributes to the regulation of cell survival, proliferation and differentiation via its effects on NF-kappa-B activation (PubMed:12917690). Negative regulator of Wnt signaling (PubMed:20227366). Inhibits HDAC6 and thereby promotes acetylation of alpha-tubulin and stabilization of microtubules (PubMed:19893491). Plays a role in the regulation of microtubule dynamics, and thereby contributes to the regulation of cell proliferation, cell polarization, cell migration, and angiogenesis (PubMed:18222923, PubMed:20194890). Required for normal cell cycle progress and normal cytokinesis (PubMed:17495026, PubMed:19893491). Inhibits nuclear translocation of NF-kappa-B (PubMed:18636086). Plays a role in the regulation of inflammation and the innate immune response, via its effects on NF-kappa-B activation (PubMed:18636086). Dispensable for the maturation of intrathymic natural killer cells, but required for the continued survival of immature natural killer cells (By similarity). Negatively regulates TNFRSF11A signaling and osteoclastogenesis (By similarity). Involved in the regulation of ciliogenesis, allowing ciliary basal bodies to migrate and dock to the plasma membrane; this process does not depend on NF-kappa-B activation (By similarity). Ability to remove linear ('Met-1'-linked) polyubiquitin chains regulates innate immunity and TNF-alpha-induced necroptosis: recruited to the LUBAC complex via interaction with SPATA2 and restricts linear polyubiquitin formation on target proteins (PubMed:26670046, PubMed:26997266, PubMed:27458237, PubMed:27591049). Regulates innate immunity by restricting linear polyubiquitin formation on RIPK2 in response to NOD2 stimulation (PubMed:26997266). Involved in TNF-alpha-induced necroptosis by removing linear ('Met-1'-linked) polyubiquitin chains from RIPK1, thereby regulating the kinase activity of RIPK1 (By similarity). Negatively regulates intestinal inflammation by removing 'Lys-63' linked polyubiquitin chain of NLRP6, thereby reducing the interaction between NLRP6 and PYCARD/ASC and formation of the NLRP6 inflammasome (By similarity). Does not catalyze deubiquitination of heterotypic 'Lys-63'-/'Lys-48'-linked branched ubiquitin chains (PubMed:27746020). Removes 'Lys-63' linked polyubiquitin chain of MAP3K7, which inhibits phosphorylation and blocks downstream activation of the JNK-p38 kinase cascades (PubMed:29291351). Also removes 'Lys-63'-linked polyubiquitin chains of MAP3K1 and MA3P3K3, which inhibit their interaction with MAP2K1 and MAP2K2 (PubMed:34497368).</text>
</comment>
<comment type="catalytic activity">
    <reaction evidence="20 30 32 33 35">
        <text>Thiol-dependent hydrolysis of ester, thioester, amide, peptide and isopeptide bonds formed by the C-terminal Gly of ubiquitin (a 76-residue protein attached to proteins as an intracellular targeting signal).</text>
        <dbReference type="EC" id="3.4.19.12"/>
    </reaction>
</comment>
<comment type="activity regulation">
    <text evidence="15">Inhibited by phosphorylation at serine residues.</text>
</comment>
<comment type="subunit">
    <text evidence="1 7 8 9 12 13 18 21 22 24 26 28 29 30 31 32 35">Interacts (via CAP-Gly domain) with IKBKG/NEMO (via proline-rich C-terminal region) (PubMed:12917689, PubMed:12917690, PubMed:12917691, PubMed:15341735). Interacts with TRAF2 and TRIP (PubMed:12917691, PubMed:14676304). Interacts with PLK1, DVL1, DVL3, MAVS, TBK1, IKKE and RIGI (PubMed:17495026, PubMed:18636086, PubMed:20227366, PubMed:32185393). Interacts (via CAP-Gly domain) with microtubules (PubMed:19893491). Interacts with HDAC6 and BCL3 (PubMed:19893491). Interacts with MAP3K7 (By similarity). Identified in a complex with TRAF6 and SQSTM1 (By similarity). Interacts with OPTN and SQSTM1 (PubMed:32185393). Interacts with CEP350 (PubMed:25134987). Interacts with RNF31; the interaction is indirect and is mediated via SPATA2 (PubMed:26997266). Interacts with SPATA2 (via the PUB domain); the interaction is direct and recruits CYLD to the LUBAC complex, thereby regulating TNF-alpha-induced necroptosis (PubMed:27307491, PubMed:27458237, PubMed:27545878, PubMed:27591049).</text>
</comment>
<comment type="interaction">
    <interactant intactId="EBI-2117940">
        <id>Q9NQC7</id>
    </interactant>
    <interactant intactId="EBI-301697">
        <id>Q9UBN7</id>
        <label>HDAC6</label>
    </interactant>
    <organismsDiffer>false</organismsDiffer>
    <experiments>4</experiments>
</comment>
<comment type="interaction">
    <interactant intactId="EBI-2117940">
        <id>Q9NQC7</id>
    </interactant>
    <interactant intactId="EBI-1564678">
        <id>Q96J02</id>
        <label>ITCH</label>
    </interactant>
    <organismsDiffer>false</organismsDiffer>
    <experiments>3</experiments>
</comment>
<comment type="interaction">
    <interactant intactId="EBI-2117940">
        <id>Q9NQC7</id>
    </interactant>
    <interactant intactId="EBI-6672198">
        <id>Q96J02-2</id>
        <label>ITCH</label>
    </interactant>
    <organismsDiffer>false</organismsDiffer>
    <experiments>2</experiments>
</comment>
<comment type="interaction">
    <interactant intactId="EBI-2117940">
        <id>Q9NQC7</id>
    </interactant>
    <interactant intactId="EBI-995350">
        <id>O95786</id>
        <label>RIGI</label>
    </interactant>
    <organismsDiffer>false</organismsDiffer>
    <experiments>2</experiments>
</comment>
<comment type="interaction">
    <interactant intactId="EBI-2117940">
        <id>Q9NQC7</id>
    </interactant>
    <interactant intactId="EBI-744066">
        <id>Q9UM82</id>
        <label>SPATA2</label>
    </interactant>
    <organismsDiffer>false</organismsDiffer>
    <experiments>3</experiments>
</comment>
<comment type="interaction">
    <interactant intactId="EBI-2117940">
        <id>Q9NQC7</id>
    </interactant>
    <interactant intactId="EBI-302552">
        <id>Q71U36</id>
        <label>TUBA1A</label>
    </interactant>
    <organismsDiffer>false</organismsDiffer>
    <experiments>6</experiments>
</comment>
<comment type="subcellular location">
    <subcellularLocation>
        <location evidence="20 35">Cytoplasm</location>
    </subcellularLocation>
    <subcellularLocation>
        <location>Cytoplasm</location>
        <location>Perinuclear region</location>
    </subcellularLocation>
    <subcellularLocation>
        <location>Cytoplasm</location>
        <location>Cytoskeleton</location>
    </subcellularLocation>
    <subcellularLocation>
        <location>Cell membrane</location>
        <topology>Peripheral membrane protein</topology>
        <orientation>Cytoplasmic side</orientation>
    </subcellularLocation>
    <subcellularLocation>
        <location evidence="26">Cytoplasm</location>
        <location evidence="26">Cytoskeleton</location>
        <location evidence="26">Microtubule organizing center</location>
        <location evidence="26">Centrosome</location>
    </subcellularLocation>
    <subcellularLocation>
        <location evidence="26">Cytoplasm</location>
        <location evidence="26">Cytoskeleton</location>
        <location evidence="26">Spindle</location>
    </subcellularLocation>
    <subcellularLocation>
        <location evidence="1">Cytoplasm</location>
        <location evidence="1">Cytoskeleton</location>
        <location evidence="1">Cilium basal body</location>
    </subcellularLocation>
    <text evidence="1 26">Detected at the microtubule cytoskeleton during interphase. Detected at the midbody during telophase. During metaphase, it remains localized to the centrosome but is also present along the spindle (PubMed:25134987).</text>
</comment>
<comment type="alternative products">
    <event type="alternative splicing"/>
    <isoform>
        <id>Q9NQC7-1</id>
        <name>1</name>
        <sequence type="displayed"/>
    </isoform>
    <isoform>
        <id>Q9NQC7-2</id>
        <name>2</name>
        <sequence type="described" ref="VSP_011277"/>
    </isoform>
</comment>
<comment type="tissue specificity">
    <text evidence="5 34">Detected in fetal brain, testis, and skeletal muscle, and at a lower level in adult brain, leukocytes, liver, heart, kidney, spleen, ovary and lung. Isoform 2 is found in all tissues except kidney.</text>
</comment>
<comment type="PTM">
    <text evidence="34">Ubiquitinated. Polyubiquitinated in hepatocytes treated with palmitic acid. Ubiquitination is mediated by E3 ligase TRIM47 and leads to proteasomal degradation.</text>
</comment>
<comment type="PTM">
    <text evidence="15">Phosphorylated on several serine residues by IKKA and/or IKKB in response to immune stimuli. Phosphorylation requires IKBKG. Phosphorylation abolishes TRAF2 deubiquitination, interferes with the activation of Jun kinases, and strongly reduces CD40-dependent gene activation by NF-kappa-B.</text>
</comment>
<comment type="disease" evidence="6 17">
    <disease id="DI-01564">
        <name>Cylindromatosis, familial</name>
        <acronym>FCYL</acronym>
        <description>A disorder characterized by multiple skin tumors that develop from skin appendages, such as hair follicles and sweat glands. Affected individuals typically develop large numbers of tumors called cylindromas that arise predominantly in hairy parts of the body with approximately 90% on the head and neck. In severely affected individuals, cylindromas may combine into a confluent mass which may ulcerate or become infected (turban tumor syndrome). Individuals with familial cylindromatosis occasionally develop other types of tumors including spiradenomas that begin in sweat glands, and trichoepitheliomas arising from hair follicles.</description>
        <dbReference type="MIM" id="132700"/>
    </disease>
    <text>The disease is caused by variants affecting the gene represented in this entry.</text>
</comment>
<comment type="disease" evidence="11 16 17">
    <disease id="DI-02007">
        <name>Trichoepithelioma, multiple familial, 1</name>
        <acronym>MFT1</acronym>
        <description>An autosomal dominant dermatosis characterized by the presence of many skin tumors predominantly on the face. Since histologic examination shows dermal aggregates of basaloid cells with connection to or differentiation toward hair follicles, this disorder has been thought to represent a benign hamartoma of the pilosebaceous apparatus. Trichoepitheliomas can degenerate into basal cell carcinoma.</description>
        <dbReference type="MIM" id="601606"/>
    </disease>
    <text>The disease is caused by variants affecting the gene represented in this entry.</text>
</comment>
<comment type="disease" evidence="6 10 11 14">
    <disease id="DI-00201">
        <name>Brooke-Spiegler syndrome</name>
        <acronym>BRSS</acronym>
        <description>An autosomal dominant disorder characterized by the appearance of multiple skin appendage tumors such as cylindroma, trichoepithelioma, and spiradenoma. These tumors are typically located in the head and neck region, appear in early adulthood, and gradually increase in size and number throughout life.</description>
        <dbReference type="MIM" id="605041"/>
    </disease>
    <text>The disease is caused by variants affecting the gene represented in this entry.</text>
</comment>
<comment type="disease" evidence="25 35 36">
    <disease id="DI-06000">
        <name>Frontotemporal dementia and/or amyotrophic lateral sclerosis 8</name>
        <acronym>FTDALS8</acronym>
        <description>A neurodegenerative disorder characterized by frontotemporal dementia and/or amyotrophic lateral sclerosis in affected individuals. There is high intrafamilial variation. Frontotemporal dementia is characterized by frontal and temporal lobe atrophy associated with neuronal loss, gliosis, and dementia. Patients exhibit progressive changes in social, behavioral, and/or language function. Amyotrophic lateral sclerosis is characterized by the death of motor neurons in the brain, brainstem, and spinal cord, resulting in fatal paralysis. FTDALS8 is an autosomal dominant form.</description>
        <dbReference type="MIM" id="619132"/>
    </disease>
    <text>The disease is caused by variants affecting the gene represented in this entry.</text>
</comment>
<comment type="similarity">
    <text evidence="41">Belongs to the peptidase C19 family.</text>
</comment>
<comment type="sequence caution" evidence="41">
    <conflict type="frameshift">
        <sequence resource="EMBL-CDS" id="AAF29029"/>
    </conflict>
</comment>
<comment type="sequence caution" evidence="41">
    <conflict type="erroneous initiation">
        <sequence resource="EMBL-CDS" id="BAA74872"/>
    </conflict>
    <text>Extended N-terminus.</text>
</comment>
<comment type="online information" name="Atlas of Genetics and Cytogenetics in Oncology and Haematology">
    <link uri="https://atlasgeneticsoncology.org/gene/40232/CYLD"/>
</comment>
<organism>
    <name type="scientific">Homo sapiens</name>
    <name type="common">Human</name>
    <dbReference type="NCBI Taxonomy" id="9606"/>
    <lineage>
        <taxon>Eukaryota</taxon>
        <taxon>Metazoa</taxon>
        <taxon>Chordata</taxon>
        <taxon>Craniata</taxon>
        <taxon>Vertebrata</taxon>
        <taxon>Euteleostomi</taxon>
        <taxon>Mammalia</taxon>
        <taxon>Eutheria</taxon>
        <taxon>Euarchontoglires</taxon>
        <taxon>Primates</taxon>
        <taxon>Haplorrhini</taxon>
        <taxon>Catarrhini</taxon>
        <taxon>Hominidae</taxon>
        <taxon>Homo</taxon>
    </lineage>
</organism>
<sequence length="956" mass="107316">MSSGLWSQEKVTSPYWEERIFYLLLQECSVTDKQTQKLLKVPKGSIGQYIQDRSVGHSRIPSAKGKKNQIGLKILEQPHAVLFVDEKDVVEINEKFTELLLAITNCEERFSLFKNRNRLSKGLQIDVGCPVKVQLRSGEEKFPGVVRFRGPLLAERTVSGIFFGVELLEEGRGQGFTDGVYQGKQLFQCDEDCGVFVALDKLELIEDDDTALESDYAGPGDTMQVELPPLEINSRVSLKVGETIESGTVIFCDVLPGKESLGYFVGVDMDNPIGNWDGRFDGVQLCSFACVESTILLHINDIIPALSESVTQERRPPKLAFMSRGVGDKGSSSHNKPKATGSTSDPGNRNRSELFYTLNGSSVDSQPQSKSKNTWYIDEVAEDPAKSLTEISTDFDRSSPPLQPPPVNSLTTENRFHSLPFSLTKMPNTNGSIGHSPLSLSAQSVMEELNTAPVQESPPLAMPPGNSHGLEVGSLAEVKENPPFYGVIRWIGQPPGLNEVLAGLELEDECAGCTDGTFRGTRYFTCALKKALFVKLKSCRPDSRFASLQPVSNQIERCNSLAFGGYLSEVVEENTPPKMEKEGLEIMIGKKKGIQGHYNSCYLDSTLFCLFAFSSVLDTVLLRPKEKNDVEYYSETQELLRTEIVNPLRIYGYVCATKIMKLRKILEKVEAASGFTSEEKDPEEFLNILFHHILRVEPLLKIRSAGQKVQDCYFYQIFMEKNEKVGVPTIQQLLEWSFINSNLKFAEAPSCLIIQMPRFGKDFKLFKKIFPSLELNITDLLEDTPRQCRICGGLAMYECRECYDDPDISAGKIKQFCKTCNTQVHLHPKRLNHKYNPVSLPKDLPDWDWRHGCIPCQNMELFAVLCIETSHYVAFVKYGKDDSAWLFFDSMADRDGGQNGFNIPQVTPCPEVGEYLKMSLEDLHSLDSRRIQGCARRLLCDAYMCMYQSPTMSLYK</sequence>